<keyword id="KW-0002">3D-structure</keyword>
<keyword id="KW-0025">Alternative splicing</keyword>
<keyword id="KW-0106">Calcium</keyword>
<keyword id="KW-1003">Cell membrane</keyword>
<keyword id="KW-0225">Disease variant</keyword>
<keyword id="KW-1015">Disulfide bond</keyword>
<keyword id="KW-0887">Epilepsy</keyword>
<keyword id="KW-0325">Glycoprotein</keyword>
<keyword id="KW-0991">Intellectual disability</keyword>
<keyword id="KW-0407">Ion channel</keyword>
<keyword id="KW-0406">Ion transport</keyword>
<keyword id="KW-1071">Ligand-gated ion channel</keyword>
<keyword id="KW-0460">Magnesium</keyword>
<keyword id="KW-0472">Membrane</keyword>
<keyword id="KW-0479">Metal-binding</keyword>
<keyword id="KW-0597">Phosphoprotein</keyword>
<keyword id="KW-0628">Postsynaptic cell membrane</keyword>
<keyword id="KW-1267">Proteomics identification</keyword>
<keyword id="KW-0675">Receptor</keyword>
<keyword id="KW-1185">Reference proteome</keyword>
<keyword id="KW-0732">Signal</keyword>
<keyword id="KW-0770">Synapse</keyword>
<keyword id="KW-0812">Transmembrane</keyword>
<keyword id="KW-1133">Transmembrane helix</keyword>
<keyword id="KW-0813">Transport</keyword>
<keyword id="KW-0862">Zinc</keyword>
<sequence>MSTMRLLTLALLFSCSVARAACDPKIVNIGAVLSTRKHEQMFREAVNQANKRHGSWKIQLNATSVTHKPNAIQMALSVCEDLISSQVYAILVSHPPTPNDHFTPTPVSYTAGFYRIPVLGLTTRMSIYSDKSIHLSFLRTVPPYSHQSSVWFEMMRVYSWNHIILLVSDDHEGRAAQKRLETLLEERESKAEKVLQFDPGTKNVTALLMEAKELEARVIILSASEDDAATVYRAAAMLNMTGSGYVWLVGEREISGNALRYAPDGILGLQLINGKNESAHISDAVGVVAQAVHELLEKENITDPPRGCVGNTNIWKTGPLFKRVLMSSKYADGVTGRVEFNEDGDRKFANYSIMNLQNRKLVQVGIYNGTHVIPNDRKIIWPGGETEKPRGYQMSTRLKIVTIHQEPFVYVKPTLSDGTCKEEFTVNGDPVKKVICTGPNDTSPGSPRHTVPQCCYGFCIDLLIKLARTMNFTYEVHLVADGKFGTQERVNNSNKKEWNGMMGELLSGQADMIVAPLTINNERAQYIEFSKPFKYQGLTILVKKEIPRSTLDSFMQPFQSTLWLLVGLSVHVVAVMLYLLDRFSPFGRFKVNSEEEEEDALTLSSAMWFSWGVLLNSGIGEGAPRSFSARILGMVWAGFAMIIVASYTANLAAFLVLDRPEERITGINDPRLRNPSDKFIYATVKQSSVDIYFRRQVELSTMYRHMEKHNYESAAEAIQAVRDNKLHAFIWDSAVLEFEASQKCDLVTTGELFFRSGFGIGMRKDSPWKQNVSLSILKSHENGFMEDLDKTWVRYQECDSRSNAPATLTFENMAGVFMLVAGGIVAGIFLIFIEIAYKRHKDARRKQMQLAFAAVNVWRKNLQDRKSGRAEPDPKKKATFRAITSTLASSFKRRRSSKDTSTGGGRGALQNQKDTVLPRRAIEREEGQLQLCSRHRES</sequence>
<dbReference type="EMBL" id="L13266">
    <property type="protein sequence ID" value="AAB59360.1"/>
    <property type="molecule type" value="mRNA"/>
</dbReference>
<dbReference type="EMBL" id="L13267">
    <property type="protein sequence ID" value="AAA36198.1"/>
    <property type="molecule type" value="mRNA"/>
</dbReference>
<dbReference type="EMBL" id="L13268">
    <property type="protein sequence ID" value="AAB59361.1"/>
    <property type="molecule type" value="mRNA"/>
</dbReference>
<dbReference type="EMBL" id="D13515">
    <property type="protein sequence ID" value="BAA02732.1"/>
    <property type="molecule type" value="mRNA"/>
</dbReference>
<dbReference type="EMBL" id="L05666">
    <property type="protein sequence ID" value="AAA21180.1"/>
    <property type="molecule type" value="mRNA"/>
</dbReference>
<dbReference type="EMBL" id="AF015730">
    <property type="protein sequence ID" value="AAB67723.1"/>
    <property type="molecule type" value="mRNA"/>
</dbReference>
<dbReference type="EMBL" id="AF015731">
    <property type="protein sequence ID" value="AAB67724.1"/>
    <property type="molecule type" value="mRNA"/>
</dbReference>
<dbReference type="EMBL" id="Z32772">
    <property type="status" value="NOT_ANNOTATED_CDS"/>
    <property type="molecule type" value="Genomic_DNA"/>
</dbReference>
<dbReference type="EMBL" id="Z32773">
    <property type="status" value="NOT_ANNOTATED_CDS"/>
    <property type="molecule type" value="Genomic_DNA"/>
</dbReference>
<dbReference type="EMBL" id="Z32774">
    <property type="status" value="NOT_ANNOTATED_CDS"/>
    <property type="molecule type" value="Genomic_DNA"/>
</dbReference>
<dbReference type="EMBL" id="AL929554">
    <property type="status" value="NOT_ANNOTATED_CDS"/>
    <property type="molecule type" value="Genomic_DNA"/>
</dbReference>
<dbReference type="EMBL" id="U08106">
    <property type="protein sequence ID" value="AAA62111.1"/>
    <property type="molecule type" value="mRNA"/>
</dbReference>
<dbReference type="EMBL" id="U08107">
    <property type="protein sequence ID" value="AAA62112.1"/>
    <property type="molecule type" value="mRNA"/>
</dbReference>
<dbReference type="EMBL" id="S57708">
    <property type="protein sequence ID" value="AAB25917.1"/>
    <property type="molecule type" value="mRNA"/>
</dbReference>
<dbReference type="CCDS" id="CCDS43910.1">
    <molecule id="Q05586-2"/>
</dbReference>
<dbReference type="CCDS" id="CCDS55354.1">
    <molecule id="Q05586-6"/>
</dbReference>
<dbReference type="CCDS" id="CCDS55355.1">
    <molecule id="Q05586-7"/>
</dbReference>
<dbReference type="CCDS" id="CCDS7031.1">
    <molecule id="Q05586-1"/>
</dbReference>
<dbReference type="CCDS" id="CCDS7032.1">
    <molecule id="Q05586-3"/>
</dbReference>
<dbReference type="PIR" id="A46612">
    <property type="entry name" value="A46612"/>
</dbReference>
<dbReference type="PIR" id="A47551">
    <property type="entry name" value="A47551"/>
</dbReference>
<dbReference type="RefSeq" id="NP_000823.4">
    <molecule id="Q05586-2"/>
    <property type="nucleotide sequence ID" value="NM_000832.6"/>
</dbReference>
<dbReference type="RefSeq" id="NP_001172019.1">
    <molecule id="Q05586-6"/>
    <property type="nucleotide sequence ID" value="NM_001185090.2"/>
</dbReference>
<dbReference type="RefSeq" id="NP_001172020.1">
    <molecule id="Q05586-7"/>
    <property type="nucleotide sequence ID" value="NM_001185091.2"/>
</dbReference>
<dbReference type="RefSeq" id="NP_015566.1">
    <molecule id="Q05586-1"/>
    <property type="nucleotide sequence ID" value="NM_007327.4"/>
</dbReference>
<dbReference type="RefSeq" id="NP_067544.1">
    <molecule id="Q05586-3"/>
    <property type="nucleotide sequence ID" value="NM_021569.4"/>
</dbReference>
<dbReference type="RefSeq" id="XP_005266128.1">
    <molecule id="Q05586-4"/>
    <property type="nucleotide sequence ID" value="XM_005266071.4"/>
</dbReference>
<dbReference type="RefSeq" id="XP_005266130.1">
    <molecule id="Q05586-5"/>
    <property type="nucleotide sequence ID" value="XM_005266073.5"/>
</dbReference>
<dbReference type="RefSeq" id="XP_054218781.1">
    <molecule id="Q05586-5"/>
    <property type="nucleotide sequence ID" value="XM_054362806.1"/>
</dbReference>
<dbReference type="RefSeq" id="XP_054218782.1">
    <molecule id="Q05586-4"/>
    <property type="nucleotide sequence ID" value="XM_054362807.1"/>
</dbReference>
<dbReference type="PDB" id="2HQW">
    <property type="method" value="X-ray"/>
    <property type="resolution" value="1.90 A"/>
    <property type="chains" value="B=875-898"/>
</dbReference>
<dbReference type="PDB" id="2NR1">
    <property type="method" value="NMR"/>
    <property type="chains" value="A=599-621"/>
</dbReference>
<dbReference type="PDB" id="3BYA">
    <property type="method" value="X-ray"/>
    <property type="resolution" value="1.85 A"/>
    <property type="chains" value="B=875-898"/>
</dbReference>
<dbReference type="PDB" id="5H8F">
    <property type="method" value="X-ray"/>
    <property type="resolution" value="1.81 A"/>
    <property type="chains" value="B=394-544, B=663-800"/>
</dbReference>
<dbReference type="PDB" id="5H8H">
    <property type="method" value="X-ray"/>
    <property type="resolution" value="2.23 A"/>
    <property type="chains" value="B=394-544, B=663-800"/>
</dbReference>
<dbReference type="PDB" id="5H8N">
    <property type="method" value="X-ray"/>
    <property type="resolution" value="2.50 A"/>
    <property type="chains" value="B=394-544, B=663-800"/>
</dbReference>
<dbReference type="PDB" id="5H8Q">
    <property type="method" value="X-ray"/>
    <property type="resolution" value="1.90 A"/>
    <property type="chains" value="B=394-544, B=663-800"/>
</dbReference>
<dbReference type="PDB" id="5I2K">
    <property type="method" value="X-ray"/>
    <property type="resolution" value="2.86 A"/>
    <property type="chains" value="B=394-544, B=663-800"/>
</dbReference>
<dbReference type="PDB" id="5I2N">
    <property type="method" value="X-ray"/>
    <property type="resolution" value="2.12 A"/>
    <property type="chains" value="B=394-544, B=663-800"/>
</dbReference>
<dbReference type="PDB" id="5KCJ">
    <property type="method" value="X-ray"/>
    <property type="resolution" value="2.09 A"/>
    <property type="chains" value="B=394-544, B=663-800"/>
</dbReference>
<dbReference type="PDB" id="5KDT">
    <property type="method" value="X-ray"/>
    <property type="resolution" value="2.44 A"/>
    <property type="chains" value="B=394-544, B=663-800"/>
</dbReference>
<dbReference type="PDB" id="5TP9">
    <property type="method" value="X-ray"/>
    <property type="resolution" value="2.40 A"/>
    <property type="chains" value="B=394-544, B=663-800"/>
</dbReference>
<dbReference type="PDB" id="5TPA">
    <property type="method" value="X-ray"/>
    <property type="resolution" value="2.48 A"/>
    <property type="chains" value="B=394-544, B=663-800"/>
</dbReference>
<dbReference type="PDB" id="6IRA">
    <property type="method" value="EM"/>
    <property type="resolution" value="4.50 A"/>
    <property type="chains" value="A/C=1-847"/>
</dbReference>
<dbReference type="PDB" id="6IRF">
    <property type="method" value="EM"/>
    <property type="resolution" value="5.10 A"/>
    <property type="chains" value="A/C=1-847"/>
</dbReference>
<dbReference type="PDB" id="6IRG">
    <property type="method" value="EM"/>
    <property type="resolution" value="5.50 A"/>
    <property type="chains" value="A/C=1-847"/>
</dbReference>
<dbReference type="PDB" id="6IRH">
    <property type="method" value="EM"/>
    <property type="resolution" value="7.80 A"/>
    <property type="chains" value="A/C=1-847"/>
</dbReference>
<dbReference type="PDB" id="7EOQ">
    <property type="method" value="EM"/>
    <property type="resolution" value="4.10 A"/>
    <property type="chains" value="B/D=1-847"/>
</dbReference>
<dbReference type="PDB" id="7EOR">
    <property type="method" value="EM"/>
    <property type="resolution" value="4.00 A"/>
    <property type="chains" value="B/D=1-847"/>
</dbReference>
<dbReference type="PDB" id="7EOS">
    <property type="method" value="EM"/>
    <property type="resolution" value="3.90 A"/>
    <property type="chains" value="B/D=1-847"/>
</dbReference>
<dbReference type="PDB" id="7EOT">
    <property type="method" value="EM"/>
    <property type="resolution" value="3.80 A"/>
    <property type="chains" value="B/D=1-847"/>
</dbReference>
<dbReference type="PDB" id="7EOU">
    <property type="method" value="EM"/>
    <property type="resolution" value="4.30 A"/>
    <property type="chains" value="B/D=1-847"/>
</dbReference>
<dbReference type="PDB" id="7EU7">
    <property type="method" value="EM"/>
    <property type="resolution" value="3.50 A"/>
    <property type="chains" value="A/C=1-847"/>
</dbReference>
<dbReference type="PDB" id="7EU8">
    <property type="method" value="EM"/>
    <property type="resolution" value="4.07 A"/>
    <property type="chains" value="A/C=1-847"/>
</dbReference>
<dbReference type="PDB" id="7YFF">
    <property type="method" value="EM"/>
    <property type="resolution" value="3.60 A"/>
    <property type="chains" value="A/C=1-840"/>
</dbReference>
<dbReference type="PDB" id="7YFL">
    <property type="method" value="EM"/>
    <property type="resolution" value="3.90 A"/>
    <property type="chains" value="A/C=1-847"/>
</dbReference>
<dbReference type="PDB" id="7YFM">
    <property type="method" value="EM"/>
    <property type="resolution" value="5.10 A"/>
    <property type="chains" value="A/C=1-847"/>
</dbReference>
<dbReference type="PDB" id="7YFO">
    <property type="method" value="EM"/>
    <property type="resolution" value="6.40 A"/>
    <property type="chains" value="A/C=1-847"/>
</dbReference>
<dbReference type="PDB" id="7YFR">
    <property type="method" value="EM"/>
    <property type="resolution" value="5.10 A"/>
    <property type="chains" value="A/C=1-847"/>
</dbReference>
<dbReference type="PDB" id="8E92">
    <property type="method" value="EM"/>
    <property type="resolution" value="3.96 A"/>
    <property type="chains" value="A/C=1-847"/>
</dbReference>
<dbReference type="PDB" id="8E93">
    <property type="method" value="EM"/>
    <property type="resolution" value="3.71 A"/>
    <property type="chains" value="A/C=1-847"/>
</dbReference>
<dbReference type="PDB" id="8E94">
    <property type="method" value="EM"/>
    <property type="resolution" value="3.72 A"/>
    <property type="chains" value="A/C=1-847"/>
</dbReference>
<dbReference type="PDB" id="8E96">
    <property type="method" value="EM"/>
    <property type="resolution" value="3.38 A"/>
    <property type="chains" value="A/C=19-847"/>
</dbReference>
<dbReference type="PDB" id="8E97">
    <property type="method" value="EM"/>
    <property type="resolution" value="4.19 A"/>
    <property type="chains" value="A/C=1-847"/>
</dbReference>
<dbReference type="PDB" id="8E98">
    <property type="method" value="EM"/>
    <property type="resolution" value="3.75 A"/>
    <property type="chains" value="A/C=1-847"/>
</dbReference>
<dbReference type="PDB" id="8E99">
    <property type="method" value="EM"/>
    <property type="resolution" value="4.24 A"/>
    <property type="chains" value="A/C=1-843"/>
</dbReference>
<dbReference type="PDB" id="8JIZ">
    <property type="method" value="EM"/>
    <property type="resolution" value="3.80 A"/>
    <property type="chains" value="B/D=1-847"/>
</dbReference>
<dbReference type="PDB" id="8JJ0">
    <property type="method" value="EM"/>
    <property type="resolution" value="4.50 A"/>
    <property type="chains" value="B/D=1-847"/>
</dbReference>
<dbReference type="PDB" id="8JJ1">
    <property type="method" value="EM"/>
    <property type="resolution" value="3.77 A"/>
    <property type="chains" value="B/D=1-847"/>
</dbReference>
<dbReference type="PDB" id="8JJ2">
    <property type="method" value="EM"/>
    <property type="resolution" value="4.30 A"/>
    <property type="chains" value="B/D=1-847"/>
</dbReference>
<dbReference type="PDB" id="8UUE">
    <property type="method" value="EM"/>
    <property type="resolution" value="3.96 A"/>
    <property type="chains" value="A/C=395-798"/>
</dbReference>
<dbReference type="PDB" id="8VUL">
    <property type="method" value="EM"/>
    <property type="resolution" value="3.83 A"/>
    <property type="chains" value="A=25-393"/>
</dbReference>
<dbReference type="PDB" id="8VUN">
    <property type="method" value="EM"/>
    <property type="resolution" value="4.01 A"/>
    <property type="chains" value="A/C=25-841"/>
</dbReference>
<dbReference type="PDB" id="8VUQ">
    <property type="method" value="EM"/>
    <property type="resolution" value="3.85 A"/>
    <property type="chains" value="A=25-393"/>
</dbReference>
<dbReference type="PDB" id="8VUR">
    <property type="method" value="EM"/>
    <property type="resolution" value="3.84 A"/>
    <property type="chains" value="A/C=27-841"/>
</dbReference>
<dbReference type="PDB" id="8VUS">
    <property type="method" value="EM"/>
    <property type="resolution" value="3.99 A"/>
    <property type="chains" value="A/C=23-798"/>
</dbReference>
<dbReference type="PDB" id="8VUT">
    <property type="method" value="EM"/>
    <property type="resolution" value="3.70 A"/>
    <property type="chains" value="A/C=25-841"/>
</dbReference>
<dbReference type="PDB" id="8VUU">
    <property type="method" value="EM"/>
    <property type="resolution" value="4.05 A"/>
    <property type="chains" value="A/C=23-838"/>
</dbReference>
<dbReference type="PDB" id="8VUV">
    <property type="method" value="EM"/>
    <property type="resolution" value="3.69 A"/>
    <property type="chains" value="A=23-393"/>
</dbReference>
<dbReference type="PDB" id="8Y1V">
    <property type="method" value="EM"/>
    <property type="resolution" value="4.20 A"/>
    <property type="chains" value="A/C=1-847"/>
</dbReference>
<dbReference type="PDB" id="9D37">
    <property type="method" value="EM"/>
    <property type="resolution" value="3.34 A"/>
    <property type="chains" value="A/C=23-847"/>
</dbReference>
<dbReference type="PDB" id="9D38">
    <property type="method" value="EM"/>
    <property type="resolution" value="3.95 A"/>
    <property type="chains" value="A/C=23-847"/>
</dbReference>
<dbReference type="PDB" id="9D39">
    <property type="method" value="EM"/>
    <property type="resolution" value="3.65 A"/>
    <property type="chains" value="A/C=23-847"/>
</dbReference>
<dbReference type="PDB" id="9D3A">
    <property type="method" value="EM"/>
    <property type="resolution" value="3.78 A"/>
    <property type="chains" value="A/C=23-847"/>
</dbReference>
<dbReference type="PDB" id="9D3B">
    <property type="method" value="EM"/>
    <property type="resolution" value="3.71 A"/>
    <property type="chains" value="A/C=23-847"/>
</dbReference>
<dbReference type="PDB" id="9D3C">
    <property type="method" value="EM"/>
    <property type="resolution" value="3.96 A"/>
    <property type="chains" value="A/C=23-847"/>
</dbReference>
<dbReference type="PDB" id="9GIB">
    <property type="method" value="X-ray"/>
    <property type="resolution" value="1.95 A"/>
    <property type="chains" value="B=394-544, B=663-800"/>
</dbReference>
<dbReference type="PDB" id="9GIC">
    <property type="method" value="X-ray"/>
    <property type="resolution" value="1.82 A"/>
    <property type="chains" value="A=394-544, A=663-801"/>
</dbReference>
<dbReference type="PDB" id="9GID">
    <property type="method" value="X-ray"/>
    <property type="resolution" value="2.00 A"/>
    <property type="chains" value="A=394-544, A=663-801"/>
</dbReference>
<dbReference type="PDB" id="9GIE">
    <property type="method" value="X-ray"/>
    <property type="resolution" value="2.36 A"/>
    <property type="chains" value="A/B=394-544, A/B=663-801"/>
</dbReference>
<dbReference type="PDB" id="9GIF">
    <property type="method" value="X-ray"/>
    <property type="resolution" value="1.90 A"/>
    <property type="chains" value="A=394-544, A=663-801"/>
</dbReference>
<dbReference type="PDB" id="9GIG">
    <property type="method" value="X-ray"/>
    <property type="resolution" value="2.09 A"/>
    <property type="chains" value="B=394-544, B=663-800"/>
</dbReference>
<dbReference type="PDB" id="9GJ1">
    <property type="method" value="X-ray"/>
    <property type="resolution" value="1.62 A"/>
    <property type="chains" value="B=394-544, B=663-800"/>
</dbReference>
<dbReference type="PDBsum" id="2HQW"/>
<dbReference type="PDBsum" id="2NR1"/>
<dbReference type="PDBsum" id="3BYA"/>
<dbReference type="PDBsum" id="5H8F"/>
<dbReference type="PDBsum" id="5H8H"/>
<dbReference type="PDBsum" id="5H8N"/>
<dbReference type="PDBsum" id="5H8Q"/>
<dbReference type="PDBsum" id="5I2K"/>
<dbReference type="PDBsum" id="5I2N"/>
<dbReference type="PDBsum" id="5KCJ"/>
<dbReference type="PDBsum" id="5KDT"/>
<dbReference type="PDBsum" id="5TP9"/>
<dbReference type="PDBsum" id="5TPA"/>
<dbReference type="PDBsum" id="6IRA"/>
<dbReference type="PDBsum" id="6IRF"/>
<dbReference type="PDBsum" id="6IRG"/>
<dbReference type="PDBsum" id="6IRH"/>
<dbReference type="PDBsum" id="7EOQ"/>
<dbReference type="PDBsum" id="7EOR"/>
<dbReference type="PDBsum" id="7EOS"/>
<dbReference type="PDBsum" id="7EOT"/>
<dbReference type="PDBsum" id="7EOU"/>
<dbReference type="PDBsum" id="7EU7"/>
<dbReference type="PDBsum" id="7EU8"/>
<dbReference type="PDBsum" id="7YFF"/>
<dbReference type="PDBsum" id="7YFL"/>
<dbReference type="PDBsum" id="7YFM"/>
<dbReference type="PDBsum" id="7YFO"/>
<dbReference type="PDBsum" id="7YFR"/>
<dbReference type="PDBsum" id="8E92"/>
<dbReference type="PDBsum" id="8E93"/>
<dbReference type="PDBsum" id="8E94"/>
<dbReference type="PDBsum" id="8E96"/>
<dbReference type="PDBsum" id="8E97"/>
<dbReference type="PDBsum" id="8E98"/>
<dbReference type="PDBsum" id="8E99"/>
<dbReference type="PDBsum" id="8JIZ"/>
<dbReference type="PDBsum" id="8JJ0"/>
<dbReference type="PDBsum" id="8JJ1"/>
<dbReference type="PDBsum" id="8JJ2"/>
<dbReference type="PDBsum" id="8UUE"/>
<dbReference type="PDBsum" id="8VUL"/>
<dbReference type="PDBsum" id="8VUN"/>
<dbReference type="PDBsum" id="8VUQ"/>
<dbReference type="PDBsum" id="8VUR"/>
<dbReference type="PDBsum" id="8VUS"/>
<dbReference type="PDBsum" id="8VUT"/>
<dbReference type="PDBsum" id="8VUU"/>
<dbReference type="PDBsum" id="8VUV"/>
<dbReference type="PDBsum" id="8Y1V"/>
<dbReference type="PDBsum" id="9D37"/>
<dbReference type="PDBsum" id="9D38"/>
<dbReference type="PDBsum" id="9D39"/>
<dbReference type="PDBsum" id="9D3A"/>
<dbReference type="PDBsum" id="9D3B"/>
<dbReference type="PDBsum" id="9D3C"/>
<dbReference type="PDBsum" id="9GIB"/>
<dbReference type="PDBsum" id="9GIC"/>
<dbReference type="PDBsum" id="9GID"/>
<dbReference type="PDBsum" id="9GIE"/>
<dbReference type="PDBsum" id="9GIF"/>
<dbReference type="PDBsum" id="9GIG"/>
<dbReference type="PDBsum" id="9GJ1"/>
<dbReference type="EMDB" id="EMD-27953"/>
<dbReference type="EMDB" id="EMD-27954"/>
<dbReference type="EMDB" id="EMD-27955"/>
<dbReference type="EMDB" id="EMD-27957"/>
<dbReference type="EMDB" id="EMD-27958"/>
<dbReference type="EMDB" id="EMD-27959"/>
<dbReference type="EMDB" id="EMD-27960"/>
<dbReference type="EMDB" id="EMD-27961"/>
<dbReference type="EMDB" id="EMD-31227"/>
<dbReference type="EMDB" id="EMD-31228"/>
<dbReference type="EMDB" id="EMD-31229"/>
<dbReference type="EMDB" id="EMD-31230"/>
<dbReference type="EMDB" id="EMD-31231"/>
<dbReference type="EMDB" id="EMD-31308"/>
<dbReference type="EMDB" id="EMD-31309"/>
<dbReference type="EMDB" id="EMD-33788"/>
<dbReference type="EMDB" id="EMD-33792"/>
<dbReference type="EMDB" id="EMD-33793"/>
<dbReference type="EMDB" id="EMD-33795"/>
<dbReference type="EMDB" id="EMD-33798"/>
<dbReference type="EMDB" id="EMD-36335"/>
<dbReference type="EMDB" id="EMD-36336"/>
<dbReference type="EMDB" id="EMD-36337"/>
<dbReference type="EMDB" id="EMD-36338"/>
<dbReference type="EMDB" id="EMD-38847"/>
<dbReference type="EMDB" id="EMD-42522"/>
<dbReference type="EMDB" id="EMD-42580"/>
<dbReference type="EMDB" id="EMD-43530"/>
<dbReference type="EMDB" id="EMD-43531"/>
<dbReference type="EMDB" id="EMD-43532"/>
<dbReference type="EMDB" id="EMD-43534"/>
<dbReference type="EMDB" id="EMD-43536"/>
<dbReference type="EMDB" id="EMD-43537"/>
<dbReference type="EMDB" id="EMD-43538"/>
<dbReference type="EMDB" id="EMD-43539"/>
<dbReference type="EMDB" id="EMD-43540"/>
<dbReference type="EMDB" id="EMD-43541"/>
<dbReference type="EMDB" id="EMD-46526"/>
<dbReference type="EMDB" id="EMD-46527"/>
<dbReference type="EMDB" id="EMD-46528"/>
<dbReference type="EMDB" id="EMD-46529"/>
<dbReference type="EMDB" id="EMD-46530"/>
<dbReference type="EMDB" id="EMD-46531"/>
<dbReference type="EMDB" id="EMD-61000"/>
<dbReference type="EMDB" id="EMD-61001"/>
<dbReference type="EMDB" id="EMD-9714"/>
<dbReference type="EMDB" id="EMD-9715"/>
<dbReference type="EMDB" id="EMD-9716"/>
<dbReference type="EMDB" id="EMD-9717"/>
<dbReference type="SASBDB" id="Q05586"/>
<dbReference type="SMR" id="Q05586"/>
<dbReference type="BioGRID" id="109159">
    <property type="interactions" value="65"/>
</dbReference>
<dbReference type="ComplexPortal" id="CPX-2202">
    <property type="entry name" value="NMDA receptor complex, GluN1-GluN2A"/>
</dbReference>
<dbReference type="ComplexPortal" id="CPX-285">
    <property type="entry name" value="NMDA receptor complex, GluN1-GluN2B"/>
</dbReference>
<dbReference type="ComplexPortal" id="CPX-286">
    <property type="entry name" value="NMDA receptor complex, GluN1-GluN2C"/>
</dbReference>
<dbReference type="ComplexPortal" id="CPX-289">
    <property type="entry name" value="NMDA receptor complex, GluN1-GluN2D"/>
</dbReference>
<dbReference type="ComplexPortal" id="CPX-294">
    <property type="entry name" value="NMDA receptor complex, GluN1-GluN2A-GluN2B"/>
</dbReference>
<dbReference type="CORUM" id="Q05586"/>
<dbReference type="FunCoup" id="Q05586">
    <property type="interactions" value="1117"/>
</dbReference>
<dbReference type="IntAct" id="Q05586">
    <property type="interactions" value="29"/>
</dbReference>
<dbReference type="MINT" id="Q05586"/>
<dbReference type="STRING" id="9606.ENSP00000360608"/>
<dbReference type="BindingDB" id="Q05586"/>
<dbReference type="ChEMBL" id="CHEMBL2015"/>
<dbReference type="DrugBank" id="DB01931">
    <property type="generic name" value="5,7-Dichlorokynurenic acid"/>
</dbReference>
<dbReference type="DrugBank" id="DB00659">
    <property type="generic name" value="Acamprosate"/>
</dbReference>
<dbReference type="DrugBank" id="DB06151">
    <property type="generic name" value="Acetylcysteine"/>
</dbReference>
<dbReference type="DrugBank" id="DB08838">
    <property type="generic name" value="Agmatine"/>
</dbReference>
<dbReference type="DrugBank" id="DB01238">
    <property type="generic name" value="Aripiprazole"/>
</dbReference>
<dbReference type="DrugBank" id="DB00128">
    <property type="generic name" value="Aspartic acid"/>
</dbReference>
<dbReference type="DrugBank" id="DB00289">
    <property type="generic name" value="Atomoxetine"/>
</dbReference>
<dbReference type="DrugBank" id="DB05824">
    <property type="generic name" value="CNS-5161"/>
</dbReference>
<dbReference type="DrugBank" id="DB04620">
    <property type="generic name" value="Cycloleucine"/>
</dbReference>
<dbReference type="DrugBank" id="DB00260">
    <property type="generic name" value="Cycloserine"/>
</dbReference>
<dbReference type="DrugBank" id="DB02655">
    <property type="generic name" value="D-Aspartic Acid"/>
</dbReference>
<dbReference type="DrugBank" id="DB03929">
    <property type="generic name" value="D-Serine"/>
</dbReference>
<dbReference type="DrugBank" id="DB00647">
    <property type="generic name" value="Dextropropoxyphene"/>
</dbReference>
<dbReference type="DrugBank" id="DB00843">
    <property type="generic name" value="Donepezil"/>
</dbReference>
<dbReference type="DrugBank" id="DB12869">
    <property type="generic name" value="Eliprodil"/>
</dbReference>
<dbReference type="DrugBank" id="DB00228">
    <property type="generic name" value="Enflurane"/>
</dbReference>
<dbReference type="DrugBank" id="DB11823">
    <property type="generic name" value="Esketamine"/>
</dbReference>
<dbReference type="DrugBank" id="DB03759">
    <property type="generic name" value="FG-9041"/>
</dbReference>
<dbReference type="DrugBank" id="DB13146">
    <property type="generic name" value="Fluciclovine (18F)"/>
</dbReference>
<dbReference type="DrugBank" id="DB06741">
    <property type="generic name" value="Gavestinel"/>
</dbReference>
<dbReference type="DrugBank" id="DB00142">
    <property type="generic name" value="Glutamic acid"/>
</dbReference>
<dbReference type="DrugBank" id="DB00874">
    <property type="generic name" value="Guaifenesin"/>
</dbReference>
<dbReference type="DrugBank" id="DB08954">
    <property type="generic name" value="Ifenprodil"/>
</dbReference>
<dbReference type="DrugBank" id="DB06738">
    <property type="generic name" value="Ketobemidone"/>
</dbReference>
<dbReference type="DrugBank" id="DB11937">
    <property type="generic name" value="Kynurenic Acid"/>
</dbReference>
<dbReference type="DrugBank" id="DB09409">
    <property type="generic name" value="Magnesium acetate tetrahydrate"/>
</dbReference>
<dbReference type="DrugBank" id="DB09481">
    <property type="generic name" value="Magnesium carbonate"/>
</dbReference>
<dbReference type="DrugBank" id="DB01043">
    <property type="generic name" value="Memantine"/>
</dbReference>
<dbReference type="DrugBank" id="DB00454">
    <property type="generic name" value="Meperidine"/>
</dbReference>
<dbReference type="DrugBank" id="DB00333">
    <property type="generic name" value="Methadone"/>
</dbReference>
<dbReference type="DrugBank" id="DB04896">
    <property type="generic name" value="Milnacipran"/>
</dbReference>
<dbReference type="DrugBank" id="DB01173">
    <property type="generic name" value="Orphenadrine"/>
</dbReference>
<dbReference type="DrugBank" id="DB00312">
    <property type="generic name" value="Pentobarbital"/>
</dbReference>
<dbReference type="DrugBank" id="DB03575">
    <property type="generic name" value="Phencyclidine"/>
</dbReference>
<dbReference type="DrugBank" id="DB01174">
    <property type="generic name" value="Phenobarbital"/>
</dbReference>
<dbReference type="DrugBank" id="DB01708">
    <property type="generic name" value="Prasterone"/>
</dbReference>
<dbReference type="DrugBank" id="DB00418">
    <property type="generic name" value="Secobarbital"/>
</dbReference>
<dbReference type="DrugBank" id="DB00127">
    <property type="generic name" value="Spermine"/>
</dbReference>
<dbReference type="DrugBank" id="DB00193">
    <property type="generic name" value="Tramadol"/>
</dbReference>
<dbReference type="DrugCentral" id="Q05586"/>
<dbReference type="GuidetoPHARMACOLOGY" id="455"/>
<dbReference type="TCDB" id="1.A.10.1.20">
    <property type="family name" value="the glutamate-gated ion channel (gic) family of neurotransmitter receptors"/>
</dbReference>
<dbReference type="GlyCosmos" id="Q05586">
    <property type="glycosylation" value="13 sites, 1 glycan"/>
</dbReference>
<dbReference type="GlyGen" id="Q05586">
    <property type="glycosylation" value="14 sites, 2 N-linked glycans (2 sites), 1 O-linked glycan (2 sites)"/>
</dbReference>
<dbReference type="iPTMnet" id="Q05586"/>
<dbReference type="PhosphoSitePlus" id="Q05586"/>
<dbReference type="SwissPalm" id="Q05586"/>
<dbReference type="BioMuta" id="GRIN1"/>
<dbReference type="DMDM" id="548377"/>
<dbReference type="jPOST" id="Q05586"/>
<dbReference type="MassIVE" id="Q05586"/>
<dbReference type="PaxDb" id="9606-ENSP00000360608"/>
<dbReference type="PeptideAtlas" id="Q05586"/>
<dbReference type="ProteomicsDB" id="58336">
    <molecule id="Q05586-1"/>
</dbReference>
<dbReference type="ProteomicsDB" id="58337">
    <molecule id="Q05586-2"/>
</dbReference>
<dbReference type="ProteomicsDB" id="58338">
    <molecule id="Q05586-3"/>
</dbReference>
<dbReference type="ProteomicsDB" id="58339">
    <molecule id="Q05586-4"/>
</dbReference>
<dbReference type="ProteomicsDB" id="58340">
    <molecule id="Q05586-5"/>
</dbReference>
<dbReference type="ProteomicsDB" id="65258"/>
<dbReference type="ProteomicsDB" id="65259"/>
<dbReference type="ABCD" id="Q05586">
    <property type="antibodies" value="8 sequenced antibodies"/>
</dbReference>
<dbReference type="Antibodypedia" id="3475">
    <property type="antibodies" value="1279 antibodies from 49 providers"/>
</dbReference>
<dbReference type="DNASU" id="2902"/>
<dbReference type="Ensembl" id="ENST00000371546.8">
    <molecule id="Q05586-5"/>
    <property type="protein sequence ID" value="ENSP00000360601.4"/>
    <property type="gene ID" value="ENSG00000176884.17"/>
</dbReference>
<dbReference type="Ensembl" id="ENST00000371550.8">
    <molecule id="Q05586-3"/>
    <property type="protein sequence ID" value="ENSP00000360605.4"/>
    <property type="gene ID" value="ENSG00000176884.17"/>
</dbReference>
<dbReference type="Ensembl" id="ENST00000371553.8">
    <molecule id="Q05586-6"/>
    <property type="protein sequence ID" value="ENSP00000360608.3"/>
    <property type="gene ID" value="ENSG00000176884.17"/>
</dbReference>
<dbReference type="Ensembl" id="ENST00000371559.8">
    <molecule id="Q05586-2"/>
    <property type="protein sequence ID" value="ENSP00000360614.4"/>
    <property type="gene ID" value="ENSG00000176884.17"/>
</dbReference>
<dbReference type="Ensembl" id="ENST00000371560.5">
    <molecule id="Q05586-7"/>
    <property type="protein sequence ID" value="ENSP00000360615.3"/>
    <property type="gene ID" value="ENSG00000176884.17"/>
</dbReference>
<dbReference type="Ensembl" id="ENST00000371561.8">
    <molecule id="Q05586-1"/>
    <property type="protein sequence ID" value="ENSP00000360616.3"/>
    <property type="gene ID" value="ENSG00000176884.17"/>
</dbReference>
<dbReference type="GeneID" id="2902"/>
<dbReference type="KEGG" id="hsa:2902"/>
<dbReference type="MANE-Select" id="ENST00000371561.8">
    <property type="protein sequence ID" value="ENSP00000360616.3"/>
    <property type="RefSeq nucleotide sequence ID" value="NM_007327.4"/>
    <property type="RefSeq protein sequence ID" value="NP_015566.1"/>
</dbReference>
<dbReference type="UCSC" id="uc004clk.4">
    <molecule id="Q05586-1"/>
    <property type="organism name" value="human"/>
</dbReference>
<dbReference type="AGR" id="HGNC:4584"/>
<dbReference type="CTD" id="2902"/>
<dbReference type="DisGeNET" id="2902"/>
<dbReference type="GeneCards" id="GRIN1"/>
<dbReference type="GeneReviews" id="GRIN1"/>
<dbReference type="HGNC" id="HGNC:4584">
    <property type="gene designation" value="GRIN1"/>
</dbReference>
<dbReference type="HPA" id="ENSG00000176884">
    <property type="expression patterns" value="Tissue enriched (brain)"/>
</dbReference>
<dbReference type="MalaCards" id="GRIN1"/>
<dbReference type="MIM" id="138249">
    <property type="type" value="gene"/>
</dbReference>
<dbReference type="MIM" id="614254">
    <property type="type" value="phenotype"/>
</dbReference>
<dbReference type="MIM" id="617820">
    <property type="type" value="phenotype"/>
</dbReference>
<dbReference type="MIM" id="619814">
    <property type="type" value="phenotype"/>
</dbReference>
<dbReference type="neXtProt" id="NX_Q05586"/>
<dbReference type="OpenTargets" id="ENSG00000176884"/>
<dbReference type="Orphanet" id="178469">
    <property type="disease" value="Autosomal dominant non-syndromic intellectual disability"/>
</dbReference>
<dbReference type="Orphanet" id="88616">
    <property type="disease" value="Autosomal recessive non-syndromic intellectual disability"/>
</dbReference>
<dbReference type="Orphanet" id="208447">
    <property type="disease" value="Bilateral generalized polymicrogyria"/>
</dbReference>
<dbReference type="Orphanet" id="1934">
    <property type="disease" value="Early infantile developmental and epileptic encephalopathy"/>
</dbReference>
<dbReference type="PharmGKB" id="PA28978"/>
<dbReference type="VEuPathDB" id="HostDB:ENSG00000176884"/>
<dbReference type="eggNOG" id="KOG4440">
    <property type="taxonomic scope" value="Eukaryota"/>
</dbReference>
<dbReference type="GeneTree" id="ENSGT00940000158016"/>
<dbReference type="HOGENOM" id="CLU_007257_2_0_1"/>
<dbReference type="InParanoid" id="Q05586"/>
<dbReference type="OMA" id="FANNTPD"/>
<dbReference type="OrthoDB" id="5984008at2759"/>
<dbReference type="PAN-GO" id="Q05586">
    <property type="GO annotations" value="10 GO annotations based on evolutionary models"/>
</dbReference>
<dbReference type="PhylomeDB" id="Q05586"/>
<dbReference type="TreeFam" id="TF351405"/>
<dbReference type="PathwayCommons" id="Q05586"/>
<dbReference type="Reactome" id="R-HSA-3928662">
    <property type="pathway name" value="EPHB-mediated forward signaling"/>
</dbReference>
<dbReference type="Reactome" id="R-HSA-438066">
    <property type="pathway name" value="Unblocking of NMDA receptors, glutamate binding and activation"/>
</dbReference>
<dbReference type="Reactome" id="R-HSA-442982">
    <property type="pathway name" value="Ras activation upon Ca2+ influx through NMDA receptor"/>
</dbReference>
<dbReference type="Reactome" id="R-HSA-5673001">
    <property type="pathway name" value="RAF/MAP kinase cascade"/>
</dbReference>
<dbReference type="Reactome" id="R-HSA-6794361">
    <property type="pathway name" value="Neurexins and neuroligins"/>
</dbReference>
<dbReference type="Reactome" id="R-HSA-8849932">
    <property type="pathway name" value="Synaptic adhesion-like molecules"/>
</dbReference>
<dbReference type="Reactome" id="R-HSA-9609736">
    <property type="pathway name" value="Assembly and cell surface presentation of NMDA receptors"/>
</dbReference>
<dbReference type="Reactome" id="R-HSA-9617324">
    <property type="pathway name" value="Negative regulation of NMDA receptor-mediated neuronal transmission"/>
</dbReference>
<dbReference type="Reactome" id="R-HSA-9620244">
    <property type="pathway name" value="Long-term potentiation"/>
</dbReference>
<dbReference type="SignaLink" id="Q05586"/>
<dbReference type="SIGNOR" id="Q05586"/>
<dbReference type="BioGRID-ORCS" id="2902">
    <property type="hits" value="9 hits in 1151 CRISPR screens"/>
</dbReference>
<dbReference type="CD-CODE" id="FB4E32DD">
    <property type="entry name" value="Presynaptic clusters and postsynaptic densities"/>
</dbReference>
<dbReference type="ChiTaRS" id="GRIN1">
    <property type="organism name" value="human"/>
</dbReference>
<dbReference type="EvolutionaryTrace" id="Q05586"/>
<dbReference type="GeneWiki" id="GRIN1"/>
<dbReference type="GenomeRNAi" id="2902"/>
<dbReference type="Pharos" id="Q05586">
    <property type="development level" value="Tclin"/>
</dbReference>
<dbReference type="PRO" id="PR:Q05586"/>
<dbReference type="Proteomes" id="UP000005640">
    <property type="component" value="Chromosome 9"/>
</dbReference>
<dbReference type="RNAct" id="Q05586">
    <property type="molecule type" value="protein"/>
</dbReference>
<dbReference type="Bgee" id="ENSG00000176884">
    <property type="expression patterns" value="Expressed in right hemisphere of cerebellum and 167 other cell types or tissues"/>
</dbReference>
<dbReference type="ExpressionAtlas" id="Q05586">
    <property type="expression patterns" value="baseline and differential"/>
</dbReference>
<dbReference type="GO" id="GO:0009986">
    <property type="term" value="C:cell surface"/>
    <property type="evidence" value="ECO:0000250"/>
    <property type="project" value="BHF-UCL"/>
</dbReference>
<dbReference type="GO" id="GO:0005737">
    <property type="term" value="C:cytoplasm"/>
    <property type="evidence" value="ECO:0000250"/>
    <property type="project" value="ARUK-UCL"/>
</dbReference>
<dbReference type="GO" id="GO:0030425">
    <property type="term" value="C:dendrite"/>
    <property type="evidence" value="ECO:0000314"/>
    <property type="project" value="UniProtKB"/>
</dbReference>
<dbReference type="GO" id="GO:0043197">
    <property type="term" value="C:dendritic spine"/>
    <property type="evidence" value="ECO:0000250"/>
    <property type="project" value="BHF-UCL"/>
</dbReference>
<dbReference type="GO" id="GO:0005789">
    <property type="term" value="C:endoplasmic reticulum membrane"/>
    <property type="evidence" value="ECO:0000304"/>
    <property type="project" value="Reactome"/>
</dbReference>
<dbReference type="GO" id="GO:0060076">
    <property type="term" value="C:excitatory synapse"/>
    <property type="evidence" value="ECO:0000250"/>
    <property type="project" value="BHF-UCL"/>
</dbReference>
<dbReference type="GO" id="GO:0034702">
    <property type="term" value="C:monoatomic ion channel complex"/>
    <property type="evidence" value="ECO:0000314"/>
    <property type="project" value="UniProt"/>
</dbReference>
<dbReference type="GO" id="GO:0043005">
    <property type="term" value="C:neuron projection"/>
    <property type="evidence" value="ECO:0000250"/>
    <property type="project" value="UniProtKB"/>
</dbReference>
<dbReference type="GO" id="GO:0098878">
    <property type="term" value="C:neurotransmitter receptor complex"/>
    <property type="evidence" value="ECO:0000314"/>
    <property type="project" value="UniProt"/>
</dbReference>
<dbReference type="GO" id="GO:0017146">
    <property type="term" value="C:NMDA selective glutamate receptor complex"/>
    <property type="evidence" value="ECO:0000314"/>
    <property type="project" value="UniProtKB"/>
</dbReference>
<dbReference type="GO" id="GO:0005886">
    <property type="term" value="C:plasma membrane"/>
    <property type="evidence" value="ECO:0000314"/>
    <property type="project" value="UniProtKB"/>
</dbReference>
<dbReference type="GO" id="GO:0014069">
    <property type="term" value="C:postsynaptic density"/>
    <property type="evidence" value="ECO:0000250"/>
    <property type="project" value="UniProtKB"/>
</dbReference>
<dbReference type="GO" id="GO:0098839">
    <property type="term" value="C:postsynaptic density membrane"/>
    <property type="evidence" value="ECO:0000250"/>
    <property type="project" value="UniProtKB"/>
</dbReference>
<dbReference type="GO" id="GO:0045211">
    <property type="term" value="C:postsynaptic membrane"/>
    <property type="evidence" value="ECO:0000250"/>
    <property type="project" value="UniProtKB"/>
</dbReference>
<dbReference type="GO" id="GO:0045202">
    <property type="term" value="C:synapse"/>
    <property type="evidence" value="ECO:0000250"/>
    <property type="project" value="UniProtKB"/>
</dbReference>
<dbReference type="GO" id="GO:0043083">
    <property type="term" value="C:synaptic cleft"/>
    <property type="evidence" value="ECO:0000250"/>
    <property type="project" value="BHF-UCL"/>
</dbReference>
<dbReference type="GO" id="GO:0097060">
    <property type="term" value="C:synaptic membrane"/>
    <property type="evidence" value="ECO:0000250"/>
    <property type="project" value="ARUK-UCL"/>
</dbReference>
<dbReference type="GO" id="GO:0008021">
    <property type="term" value="C:synaptic vesicle"/>
    <property type="evidence" value="ECO:0000250"/>
    <property type="project" value="UniProtKB"/>
</dbReference>
<dbReference type="GO" id="GO:0043195">
    <property type="term" value="C:terminal bouton"/>
    <property type="evidence" value="ECO:0000250"/>
    <property type="project" value="BHF-UCL"/>
</dbReference>
<dbReference type="GO" id="GO:0001540">
    <property type="term" value="F:amyloid-beta binding"/>
    <property type="evidence" value="ECO:0000250"/>
    <property type="project" value="ARUK-UCL"/>
</dbReference>
<dbReference type="GO" id="GO:0005509">
    <property type="term" value="F:calcium ion binding"/>
    <property type="evidence" value="ECO:0000250"/>
    <property type="project" value="UniProtKB"/>
</dbReference>
<dbReference type="GO" id="GO:0005516">
    <property type="term" value="F:calmodulin binding"/>
    <property type="evidence" value="ECO:0000250"/>
    <property type="project" value="UniProtKB"/>
</dbReference>
<dbReference type="GO" id="GO:0016595">
    <property type="term" value="F:glutamate binding"/>
    <property type="evidence" value="ECO:0000314"/>
    <property type="project" value="UniProtKB"/>
</dbReference>
<dbReference type="GO" id="GO:0022849">
    <property type="term" value="F:glutamate-gated calcium ion channel activity"/>
    <property type="evidence" value="ECO:0000314"/>
    <property type="project" value="UniProtKB"/>
</dbReference>
<dbReference type="GO" id="GO:0016594">
    <property type="term" value="F:glycine binding"/>
    <property type="evidence" value="ECO:0000314"/>
    <property type="project" value="UniProtKB"/>
</dbReference>
<dbReference type="GO" id="GO:0160212">
    <property type="term" value="F:glycine-gated cation channel activity"/>
    <property type="evidence" value="ECO:0000250"/>
    <property type="project" value="UniProt"/>
</dbReference>
<dbReference type="GO" id="GO:0015280">
    <property type="term" value="F:ligand-gated sodium channel activity"/>
    <property type="evidence" value="ECO:0000314"/>
    <property type="project" value="UniProtKB"/>
</dbReference>
<dbReference type="GO" id="GO:0004972">
    <property type="term" value="F:NMDA glutamate receptor activity"/>
    <property type="evidence" value="ECO:0000314"/>
    <property type="project" value="UniProtKB"/>
</dbReference>
<dbReference type="GO" id="GO:0044877">
    <property type="term" value="F:protein-containing complex binding"/>
    <property type="evidence" value="ECO:0000250"/>
    <property type="project" value="ARUK-UCL"/>
</dbReference>
<dbReference type="GO" id="GO:0038023">
    <property type="term" value="F:signaling receptor activity"/>
    <property type="evidence" value="ECO:0000318"/>
    <property type="project" value="GO_Central"/>
</dbReference>
<dbReference type="GO" id="GO:0007420">
    <property type="term" value="P:brain development"/>
    <property type="evidence" value="ECO:0000303"/>
    <property type="project" value="ARUK-UCL"/>
</dbReference>
<dbReference type="GO" id="GO:0055074">
    <property type="term" value="P:calcium ion homeostasis"/>
    <property type="evidence" value="ECO:0000250"/>
    <property type="project" value="UniProtKB"/>
</dbReference>
<dbReference type="GO" id="GO:0097553">
    <property type="term" value="P:calcium ion transmembrane import into cytosol"/>
    <property type="evidence" value="ECO:0000314"/>
    <property type="project" value="UniProtKB"/>
</dbReference>
<dbReference type="GO" id="GO:0070588">
    <property type="term" value="P:calcium ion transmembrane transport"/>
    <property type="evidence" value="ECO:0000314"/>
    <property type="project" value="UniProtKB"/>
</dbReference>
<dbReference type="GO" id="GO:0007268">
    <property type="term" value="P:chemical synaptic transmission"/>
    <property type="evidence" value="ECO:0000318"/>
    <property type="project" value="GO_Central"/>
</dbReference>
<dbReference type="GO" id="GO:0098976">
    <property type="term" value="P:excitatory chemical synaptic transmission"/>
    <property type="evidence" value="ECO:0000303"/>
    <property type="project" value="ARUK-UCL"/>
</dbReference>
<dbReference type="GO" id="GO:0060079">
    <property type="term" value="P:excitatory postsynaptic potential"/>
    <property type="evidence" value="ECO:0000250"/>
    <property type="project" value="UniProtKB"/>
</dbReference>
<dbReference type="GO" id="GO:0035235">
    <property type="term" value="P:ionotropic glutamate receptor signaling pathway"/>
    <property type="evidence" value="ECO:0000315"/>
    <property type="project" value="UniProtKB"/>
</dbReference>
<dbReference type="GO" id="GO:0098655">
    <property type="term" value="P:monoatomic cation transmembrane transport"/>
    <property type="evidence" value="ECO:0000314"/>
    <property type="project" value="UniProt"/>
</dbReference>
<dbReference type="GO" id="GO:0006812">
    <property type="term" value="P:monoatomic cation transport"/>
    <property type="evidence" value="ECO:0000314"/>
    <property type="project" value="UniProtKB"/>
</dbReference>
<dbReference type="GO" id="GO:0010524">
    <property type="term" value="P:positive regulation of calcium ion transport into cytosol"/>
    <property type="evidence" value="ECO:0000250"/>
    <property type="project" value="ARUK-UCL"/>
</dbReference>
<dbReference type="GO" id="GO:2000463">
    <property type="term" value="P:positive regulation of excitatory postsynaptic potential"/>
    <property type="evidence" value="ECO:0000250"/>
    <property type="project" value="BHF-UCL"/>
</dbReference>
<dbReference type="GO" id="GO:1903428">
    <property type="term" value="P:positive regulation of reactive oxygen species biosynthetic process"/>
    <property type="evidence" value="ECO:0000250"/>
    <property type="project" value="ARUK-UCL"/>
</dbReference>
<dbReference type="GO" id="GO:0051968">
    <property type="term" value="P:positive regulation of synaptic transmission, glutamatergic"/>
    <property type="evidence" value="ECO:0000266"/>
    <property type="project" value="ComplexPortal"/>
</dbReference>
<dbReference type="GO" id="GO:0045944">
    <property type="term" value="P:positive regulation of transcription by RNA polymerase II"/>
    <property type="evidence" value="ECO:0000250"/>
    <property type="project" value="UniProtKB"/>
</dbReference>
<dbReference type="GO" id="GO:0018964">
    <property type="term" value="P:propylene metabolic process"/>
    <property type="evidence" value="ECO:0000250"/>
    <property type="project" value="BHF-UCL"/>
</dbReference>
<dbReference type="GO" id="GO:0051290">
    <property type="term" value="P:protein heterotetramerization"/>
    <property type="evidence" value="ECO:0000250"/>
    <property type="project" value="UniProtKB"/>
</dbReference>
<dbReference type="GO" id="GO:0042391">
    <property type="term" value="P:regulation of membrane potential"/>
    <property type="evidence" value="ECO:0000314"/>
    <property type="project" value="UniProtKB"/>
</dbReference>
<dbReference type="GO" id="GO:1904062">
    <property type="term" value="P:regulation of monoatomic cation transmembrane transport"/>
    <property type="evidence" value="ECO:0000266"/>
    <property type="project" value="ComplexPortal"/>
</dbReference>
<dbReference type="GO" id="GO:0048168">
    <property type="term" value="P:regulation of neuronal synaptic plasticity"/>
    <property type="evidence" value="ECO:0000303"/>
    <property type="project" value="ComplexPortal"/>
</dbReference>
<dbReference type="GO" id="GO:0048167">
    <property type="term" value="P:regulation of synaptic plasticity"/>
    <property type="evidence" value="ECO:0000250"/>
    <property type="project" value="UniProtKB"/>
</dbReference>
<dbReference type="GO" id="GO:0045471">
    <property type="term" value="P:response to ethanol"/>
    <property type="evidence" value="ECO:0000314"/>
    <property type="project" value="UniProtKB"/>
</dbReference>
<dbReference type="GO" id="GO:1905429">
    <property type="term" value="P:response to glycine"/>
    <property type="evidence" value="ECO:0000314"/>
    <property type="project" value="UniProtKB"/>
</dbReference>
<dbReference type="GO" id="GO:0035725">
    <property type="term" value="P:sodium ion transmembrane transport"/>
    <property type="evidence" value="ECO:0000314"/>
    <property type="project" value="UniProtKB"/>
</dbReference>
<dbReference type="GO" id="GO:0008542">
    <property type="term" value="P:visual learning"/>
    <property type="evidence" value="ECO:0000250"/>
    <property type="project" value="UniProtKB"/>
</dbReference>
<dbReference type="CDD" id="cd06379">
    <property type="entry name" value="PBP1_iGluR_NMDA_NR1"/>
    <property type="match status" value="1"/>
</dbReference>
<dbReference type="CDD" id="cd13719">
    <property type="entry name" value="PBP2_iGluR_NMDA_Nr1"/>
    <property type="match status" value="1"/>
</dbReference>
<dbReference type="FunFam" id="3.40.190.10:FF:000010">
    <property type="entry name" value="glutamate receptor ionotropic, NMDA 1 isoform X1"/>
    <property type="match status" value="1"/>
</dbReference>
<dbReference type="FunFam" id="3.40.50.2300:FF:000025">
    <property type="entry name" value="glutamate receptor ionotropic, NMDA 1 isoform X1"/>
    <property type="match status" value="1"/>
</dbReference>
<dbReference type="FunFam" id="3.40.190.10:FF:000012">
    <property type="entry name" value="glutamate receptor ionotropic, NMDA 1 isoform X2"/>
    <property type="match status" value="1"/>
</dbReference>
<dbReference type="FunFam" id="3.40.50.2300:FF:000053">
    <property type="entry name" value="glutamate receptor ionotropic, NMDA 1 isoform X2"/>
    <property type="match status" value="1"/>
</dbReference>
<dbReference type="FunFam" id="3.40.190.10:FF:000025">
    <property type="entry name" value="glutamate receptor ionotropic, NMDA 1 isoform X3"/>
    <property type="match status" value="1"/>
</dbReference>
<dbReference type="FunFam" id="1.10.287.70:FF:000087">
    <property type="entry name" value="glutamate receptor ionotropic, NMDA 1 isoform X4"/>
    <property type="match status" value="1"/>
</dbReference>
<dbReference type="Gene3D" id="1.10.287.70">
    <property type="match status" value="1"/>
</dbReference>
<dbReference type="Gene3D" id="3.40.50.2300">
    <property type="match status" value="2"/>
</dbReference>
<dbReference type="Gene3D" id="3.40.190.10">
    <property type="entry name" value="Periplasmic binding protein-like II"/>
    <property type="match status" value="3"/>
</dbReference>
<dbReference type="InterPro" id="IPR001828">
    <property type="entry name" value="ANF_lig-bd_rcpt"/>
</dbReference>
<dbReference type="InterPro" id="IPR019594">
    <property type="entry name" value="Glu/Gly-bd"/>
</dbReference>
<dbReference type="InterPro" id="IPR001508">
    <property type="entry name" value="Iono_Glu_rcpt_met"/>
</dbReference>
<dbReference type="InterPro" id="IPR015683">
    <property type="entry name" value="Ionotropic_Glu_rcpt"/>
</dbReference>
<dbReference type="InterPro" id="IPR001320">
    <property type="entry name" value="Iontro_rcpt_C"/>
</dbReference>
<dbReference type="InterPro" id="IPR049872">
    <property type="entry name" value="NMDA1-like_ligand-bd"/>
</dbReference>
<dbReference type="InterPro" id="IPR049873">
    <property type="entry name" value="NMDA1-like_N"/>
</dbReference>
<dbReference type="InterPro" id="IPR028082">
    <property type="entry name" value="Peripla_BP_I"/>
</dbReference>
<dbReference type="PANTHER" id="PTHR18966">
    <property type="entry name" value="IONOTROPIC GLUTAMATE RECEPTOR"/>
    <property type="match status" value="1"/>
</dbReference>
<dbReference type="Pfam" id="PF01094">
    <property type="entry name" value="ANF_receptor"/>
    <property type="match status" value="1"/>
</dbReference>
<dbReference type="Pfam" id="PF00060">
    <property type="entry name" value="Lig_chan"/>
    <property type="match status" value="1"/>
</dbReference>
<dbReference type="Pfam" id="PF10613">
    <property type="entry name" value="Lig_chan-Glu_bd"/>
    <property type="match status" value="1"/>
</dbReference>
<dbReference type="PRINTS" id="PR00177">
    <property type="entry name" value="NMDARECEPTOR"/>
</dbReference>
<dbReference type="SMART" id="SM00918">
    <property type="entry name" value="Lig_chan-Glu_bd"/>
    <property type="match status" value="1"/>
</dbReference>
<dbReference type="SMART" id="SM00079">
    <property type="entry name" value="PBPe"/>
    <property type="match status" value="1"/>
</dbReference>
<dbReference type="SUPFAM" id="SSF53822">
    <property type="entry name" value="Periplasmic binding protein-like I"/>
    <property type="match status" value="1"/>
</dbReference>
<dbReference type="SUPFAM" id="SSF53850">
    <property type="entry name" value="Periplasmic binding protein-like II"/>
    <property type="match status" value="1"/>
</dbReference>
<dbReference type="SUPFAM" id="SSF81324">
    <property type="entry name" value="Voltage-gated potassium channels"/>
    <property type="match status" value="1"/>
</dbReference>
<evidence type="ECO:0000250" key="1"/>
<evidence type="ECO:0000250" key="2">
    <source>
        <dbReference type="UniProtKB" id="A0A1L8F5J9"/>
    </source>
</evidence>
<evidence type="ECO:0000250" key="3">
    <source>
        <dbReference type="UniProtKB" id="P35438"/>
    </source>
</evidence>
<evidence type="ECO:0000250" key="4">
    <source>
        <dbReference type="UniProtKB" id="P35439"/>
    </source>
</evidence>
<evidence type="ECO:0000255" key="5"/>
<evidence type="ECO:0000256" key="6">
    <source>
        <dbReference type="SAM" id="MobiDB-lite"/>
    </source>
</evidence>
<evidence type="ECO:0000269" key="7">
    <source>
    </source>
</evidence>
<evidence type="ECO:0000269" key="8">
    <source>
    </source>
</evidence>
<evidence type="ECO:0000269" key="9">
    <source>
    </source>
</evidence>
<evidence type="ECO:0000269" key="10">
    <source>
    </source>
</evidence>
<evidence type="ECO:0000269" key="11">
    <source>
    </source>
</evidence>
<evidence type="ECO:0000269" key="12">
    <source>
    </source>
</evidence>
<evidence type="ECO:0000269" key="13">
    <source>
    </source>
</evidence>
<evidence type="ECO:0000269" key="14">
    <source>
    </source>
</evidence>
<evidence type="ECO:0000269" key="15">
    <source>
    </source>
</evidence>
<evidence type="ECO:0000269" key="16">
    <source>
    </source>
</evidence>
<evidence type="ECO:0000269" key="17">
    <source>
    </source>
</evidence>
<evidence type="ECO:0000269" key="18">
    <source>
    </source>
</evidence>
<evidence type="ECO:0000269" key="19">
    <source>
    </source>
</evidence>
<evidence type="ECO:0000269" key="20">
    <source>
    </source>
</evidence>
<evidence type="ECO:0000269" key="21">
    <source>
    </source>
</evidence>
<evidence type="ECO:0000269" key="22">
    <source>
    </source>
</evidence>
<evidence type="ECO:0000269" key="23">
    <source>
    </source>
</evidence>
<evidence type="ECO:0000269" key="24">
    <source>
    </source>
</evidence>
<evidence type="ECO:0000269" key="25">
    <source>
    </source>
</evidence>
<evidence type="ECO:0000269" key="26">
    <source>
    </source>
</evidence>
<evidence type="ECO:0000269" key="27">
    <source>
    </source>
</evidence>
<evidence type="ECO:0000269" key="28">
    <source>
    </source>
</evidence>
<evidence type="ECO:0000269" key="29">
    <source>
    </source>
</evidence>
<evidence type="ECO:0000269" key="30">
    <source>
    </source>
</evidence>
<evidence type="ECO:0000269" key="31">
    <source>
    </source>
</evidence>
<evidence type="ECO:0000269" key="32">
    <source>
    </source>
</evidence>
<evidence type="ECO:0000303" key="33">
    <source>
    </source>
</evidence>
<evidence type="ECO:0000303" key="34">
    <source>
    </source>
</evidence>
<evidence type="ECO:0000303" key="35">
    <source>
    </source>
</evidence>
<evidence type="ECO:0000303" key="36">
    <source>
    </source>
</evidence>
<evidence type="ECO:0000303" key="37">
    <source>
    </source>
</evidence>
<evidence type="ECO:0000305" key="38"/>
<evidence type="ECO:0000305" key="39">
    <source>
    </source>
</evidence>
<evidence type="ECO:0000312" key="40">
    <source>
        <dbReference type="HGNC" id="HGNC:4584"/>
    </source>
</evidence>
<evidence type="ECO:0000312" key="41">
    <source>
        <dbReference type="PDB" id="8E92"/>
    </source>
</evidence>
<evidence type="ECO:0000312" key="42">
    <source>
        <dbReference type="PDB" id="8E93"/>
    </source>
</evidence>
<evidence type="ECO:0000312" key="43">
    <source>
        <dbReference type="PDB" id="8E94"/>
    </source>
</evidence>
<evidence type="ECO:0000312" key="44">
    <source>
        <dbReference type="PDB" id="8E96"/>
    </source>
</evidence>
<evidence type="ECO:0000312" key="45">
    <source>
        <dbReference type="PDB" id="8E97"/>
    </source>
</evidence>
<evidence type="ECO:0000312" key="46">
    <source>
        <dbReference type="PDB" id="8E98"/>
    </source>
</evidence>
<evidence type="ECO:0000312" key="47">
    <source>
        <dbReference type="PDB" id="8E99"/>
    </source>
</evidence>
<evidence type="ECO:0000312" key="48">
    <source>
        <dbReference type="PDB" id="8UUE"/>
    </source>
</evidence>
<evidence type="ECO:0007744" key="49">
    <source>
        <dbReference type="PDB" id="2NR1"/>
    </source>
</evidence>
<evidence type="ECO:0007744" key="50">
    <source>
        <dbReference type="PDB" id="5H8F"/>
    </source>
</evidence>
<evidence type="ECO:0007744" key="51">
    <source>
        <dbReference type="PDB" id="5H8H"/>
    </source>
</evidence>
<evidence type="ECO:0007744" key="52">
    <source>
        <dbReference type="PDB" id="5H8N"/>
    </source>
</evidence>
<evidence type="ECO:0007744" key="53">
    <source>
        <dbReference type="PDB" id="5H8Q"/>
    </source>
</evidence>
<evidence type="ECO:0007744" key="54">
    <source>
        <dbReference type="PDB" id="5I2K"/>
    </source>
</evidence>
<evidence type="ECO:0007744" key="55">
    <source>
        <dbReference type="PDB" id="5I2N"/>
    </source>
</evidence>
<evidence type="ECO:0007744" key="56">
    <source>
        <dbReference type="PDB" id="5KCJ"/>
    </source>
</evidence>
<evidence type="ECO:0007744" key="57">
    <source>
        <dbReference type="PDB" id="5KDT"/>
    </source>
</evidence>
<evidence type="ECO:0007744" key="58">
    <source>
        <dbReference type="PDB" id="5TP9"/>
    </source>
</evidence>
<evidence type="ECO:0007744" key="59">
    <source>
        <dbReference type="PDB" id="5TPA"/>
    </source>
</evidence>
<evidence type="ECO:0007744" key="60">
    <source>
        <dbReference type="PDB" id="7EOQ"/>
    </source>
</evidence>
<evidence type="ECO:0007744" key="61">
    <source>
        <dbReference type="PDB" id="7EOR"/>
    </source>
</evidence>
<evidence type="ECO:0007744" key="62">
    <source>
        <dbReference type="PDB" id="7EOS"/>
    </source>
</evidence>
<evidence type="ECO:0007744" key="63">
    <source>
        <dbReference type="PDB" id="7EOT"/>
    </source>
</evidence>
<evidence type="ECO:0007744" key="64">
    <source>
        <dbReference type="PDB" id="7EOU"/>
    </source>
</evidence>
<evidence type="ECO:0007744" key="65">
    <source>
        <dbReference type="PDB" id="7EU7"/>
    </source>
</evidence>
<evidence type="ECO:0007744" key="66">
    <source>
        <dbReference type="PDB" id="7EU8"/>
    </source>
</evidence>
<evidence type="ECO:0007744" key="67">
    <source>
        <dbReference type="PDB" id="7YFF"/>
    </source>
</evidence>
<evidence type="ECO:0007744" key="68">
    <source>
        <dbReference type="PDB" id="7YFL"/>
    </source>
</evidence>
<evidence type="ECO:0007744" key="69">
    <source>
        <dbReference type="PDB" id="7YFM"/>
    </source>
</evidence>
<evidence type="ECO:0007744" key="70">
    <source>
        <dbReference type="PDB" id="7YFO"/>
    </source>
</evidence>
<evidence type="ECO:0007744" key="71">
    <source>
        <dbReference type="PDB" id="7YFR"/>
    </source>
</evidence>
<evidence type="ECO:0007744" key="72">
    <source>
        <dbReference type="PDB" id="8E92"/>
    </source>
</evidence>
<evidence type="ECO:0007744" key="73">
    <source>
        <dbReference type="PDB" id="8E93"/>
    </source>
</evidence>
<evidence type="ECO:0007744" key="74">
    <source>
        <dbReference type="PDB" id="8E94"/>
    </source>
</evidence>
<evidence type="ECO:0007744" key="75">
    <source>
        <dbReference type="PDB" id="8E97"/>
    </source>
</evidence>
<evidence type="ECO:0007744" key="76">
    <source>
        <dbReference type="PDB" id="8E98"/>
    </source>
</evidence>
<evidence type="ECO:0007744" key="77">
    <source>
        <dbReference type="PDB" id="8E99"/>
    </source>
</evidence>
<evidence type="ECO:0007744" key="78">
    <source>
        <dbReference type="PDB" id="8UUE"/>
    </source>
</evidence>
<evidence type="ECO:0007829" key="79">
    <source>
        <dbReference type="PDB" id="3BYA"/>
    </source>
</evidence>
<evidence type="ECO:0007829" key="80">
    <source>
        <dbReference type="PDB" id="5H8F"/>
    </source>
</evidence>
<evidence type="ECO:0007829" key="81">
    <source>
        <dbReference type="PDB" id="5H8Q"/>
    </source>
</evidence>
<evidence type="ECO:0007829" key="82">
    <source>
        <dbReference type="PDB" id="5I2K"/>
    </source>
</evidence>
<evidence type="ECO:0007829" key="83">
    <source>
        <dbReference type="PDB" id="5I2N"/>
    </source>
</evidence>
<evidence type="ECO:0007829" key="84">
    <source>
        <dbReference type="PDB" id="7EU7"/>
    </source>
</evidence>
<evidence type="ECO:0007829" key="85">
    <source>
        <dbReference type="PDB" id="8E96"/>
    </source>
</evidence>
<reference key="1">
    <citation type="journal article" date="1993" name="Gene">
        <title>Cloning and sequence analysis of cDNAs encoding human hippocampus N-methyl-D-aspartate receptor subunits: evidence for alternative RNA splicing.</title>
        <authorList>
            <person name="Foldes R.L."/>
            <person name="Rampersad V."/>
            <person name="Kamboj R.K."/>
        </authorList>
    </citation>
    <scope>NUCLEOTIDE SEQUENCE [MRNA] (ISOFORM 1)</scope>
    <scope>NUCLEOTIDE SEQUENCE [MRNA] OF 11-938 (ISOFORM 3)</scope>
    <scope>NUCLEOTIDE SEQUENCE [MRNA] OF 300-938 (ISOFORM 2)</scope>
    <source>
        <tissue>Brain</tissue>
    </source>
</reference>
<reference key="2">
    <citation type="journal article" date="1993" name="J. Biol. Chem.">
        <title>Molecular cloning and chromosomal localization of the key subunit of the human N-methyl-D-aspartate receptor.</title>
        <authorList>
            <person name="Karp S.J."/>
            <person name="Masu M."/>
            <person name="Eki T."/>
            <person name="Ozawa K."/>
            <person name="Nakanishi S."/>
        </authorList>
    </citation>
    <scope>NUCLEOTIDE SEQUENCE [MRNA] (ISOFORM 3)</scope>
    <scope>FUNCTION</scope>
    <scope>TRANSPORTER ACTIVITY</scope>
    <scope>ACTIVITY REGULATION</scope>
</reference>
<reference key="3">
    <citation type="journal article" date="1993" name="Proc. Natl. Acad. Sci. U.S.A.">
        <title>Molecular cloning, functional expression, and pharmacological characterization of an N-methyl-D-aspartate receptor subunit from human brain.</title>
        <authorList>
            <person name="Planells-Cases R."/>
            <person name="Sun W."/>
            <person name="Ferrer-Montiel A.V."/>
            <person name="Montal M."/>
        </authorList>
    </citation>
    <scope>NUCLEOTIDE SEQUENCE [MRNA] (ISOFORM 1)</scope>
    <scope>FUNCTION</scope>
    <scope>TRANSPORTER ACTIVITY</scope>
    <scope>ACTIVITY REGULATION</scope>
    <scope>SUBUNIT</scope>
    <scope>SUBCELLULAR LOCATION</scope>
    <source>
        <tissue>Brain</tissue>
    </source>
</reference>
<reference key="4">
    <citation type="journal article" date="1995" name="Gene">
        <title>Cloning and structure of the gene encoding the human N-methyl-D-aspartate receptor (NMDAR1).</title>
        <authorList>
            <person name="Zimmer M."/>
            <person name="Fink T.M."/>
            <person name="Franke Y."/>
            <person name="Lichter P."/>
            <person name="Spiess J."/>
        </authorList>
    </citation>
    <scope>NUCLEOTIDE SEQUENCE [GENOMIC DNA]</scope>
</reference>
<reference key="5">
    <citation type="journal article" date="1997" name="J. Neurochem.">
        <title>Cloning and localization of exon 5-containing isoforms of the NMDAR1 subunit in human and rat brains.</title>
        <authorList>
            <person name="Nash N.R."/>
            <person name="Heilman C.J."/>
            <person name="Rees H.D."/>
            <person name="Levey A.I."/>
        </authorList>
    </citation>
    <scope>NUCLEOTIDE SEQUENCE [MRNA] (ISOFORMS 6 AND 7)</scope>
    <scope>VARIANTS MET-540 AND SER-682</scope>
</reference>
<reference key="6">
    <citation type="journal article" date="2004" name="Nature">
        <title>DNA sequence and analysis of human chromosome 9.</title>
        <authorList>
            <person name="Humphray S.J."/>
            <person name="Oliver K."/>
            <person name="Hunt A.R."/>
            <person name="Plumb R.W."/>
            <person name="Loveland J.E."/>
            <person name="Howe K.L."/>
            <person name="Andrews T.D."/>
            <person name="Searle S."/>
            <person name="Hunt S.E."/>
            <person name="Scott C.E."/>
            <person name="Jones M.C."/>
            <person name="Ainscough R."/>
            <person name="Almeida J.P."/>
            <person name="Ambrose K.D."/>
            <person name="Ashwell R.I.S."/>
            <person name="Babbage A.K."/>
            <person name="Babbage S."/>
            <person name="Bagguley C.L."/>
            <person name="Bailey J."/>
            <person name="Banerjee R."/>
            <person name="Barker D.J."/>
            <person name="Barlow K.F."/>
            <person name="Bates K."/>
            <person name="Beasley H."/>
            <person name="Beasley O."/>
            <person name="Bird C.P."/>
            <person name="Bray-Allen S."/>
            <person name="Brown A.J."/>
            <person name="Brown J.Y."/>
            <person name="Burford D."/>
            <person name="Burrill W."/>
            <person name="Burton J."/>
            <person name="Carder C."/>
            <person name="Carter N.P."/>
            <person name="Chapman J.C."/>
            <person name="Chen Y."/>
            <person name="Clarke G."/>
            <person name="Clark S.Y."/>
            <person name="Clee C.M."/>
            <person name="Clegg S."/>
            <person name="Collier R.E."/>
            <person name="Corby N."/>
            <person name="Crosier M."/>
            <person name="Cummings A.T."/>
            <person name="Davies J."/>
            <person name="Dhami P."/>
            <person name="Dunn M."/>
            <person name="Dutta I."/>
            <person name="Dyer L.W."/>
            <person name="Earthrowl M.E."/>
            <person name="Faulkner L."/>
            <person name="Fleming C.J."/>
            <person name="Frankish A."/>
            <person name="Frankland J.A."/>
            <person name="French L."/>
            <person name="Fricker D.G."/>
            <person name="Garner P."/>
            <person name="Garnett J."/>
            <person name="Ghori J."/>
            <person name="Gilbert J.G.R."/>
            <person name="Glison C."/>
            <person name="Grafham D.V."/>
            <person name="Gribble S."/>
            <person name="Griffiths C."/>
            <person name="Griffiths-Jones S."/>
            <person name="Grocock R."/>
            <person name="Guy J."/>
            <person name="Hall R.E."/>
            <person name="Hammond S."/>
            <person name="Harley J.L."/>
            <person name="Harrison E.S.I."/>
            <person name="Hart E.A."/>
            <person name="Heath P.D."/>
            <person name="Henderson C.D."/>
            <person name="Hopkins B.L."/>
            <person name="Howard P.J."/>
            <person name="Howden P.J."/>
            <person name="Huckle E."/>
            <person name="Johnson C."/>
            <person name="Johnson D."/>
            <person name="Joy A.A."/>
            <person name="Kay M."/>
            <person name="Keenan S."/>
            <person name="Kershaw J.K."/>
            <person name="Kimberley A.M."/>
            <person name="King A."/>
            <person name="Knights A."/>
            <person name="Laird G.K."/>
            <person name="Langford C."/>
            <person name="Lawlor S."/>
            <person name="Leongamornlert D.A."/>
            <person name="Leversha M."/>
            <person name="Lloyd C."/>
            <person name="Lloyd D.M."/>
            <person name="Lovell J."/>
            <person name="Martin S."/>
            <person name="Mashreghi-Mohammadi M."/>
            <person name="Matthews L."/>
            <person name="McLaren S."/>
            <person name="McLay K.E."/>
            <person name="McMurray A."/>
            <person name="Milne S."/>
            <person name="Nickerson T."/>
            <person name="Nisbett J."/>
            <person name="Nordsiek G."/>
            <person name="Pearce A.V."/>
            <person name="Peck A.I."/>
            <person name="Porter K.M."/>
            <person name="Pandian R."/>
            <person name="Pelan S."/>
            <person name="Phillimore B."/>
            <person name="Povey S."/>
            <person name="Ramsey Y."/>
            <person name="Rand V."/>
            <person name="Scharfe M."/>
            <person name="Sehra H.K."/>
            <person name="Shownkeen R."/>
            <person name="Sims S.K."/>
            <person name="Skuce C.D."/>
            <person name="Smith M."/>
            <person name="Steward C.A."/>
            <person name="Swarbreck D."/>
            <person name="Sycamore N."/>
            <person name="Tester J."/>
            <person name="Thorpe A."/>
            <person name="Tracey A."/>
            <person name="Tromans A."/>
            <person name="Thomas D.W."/>
            <person name="Wall M."/>
            <person name="Wallis J.M."/>
            <person name="West A.P."/>
            <person name="Whitehead S.L."/>
            <person name="Willey D.L."/>
            <person name="Williams S.A."/>
            <person name="Wilming L."/>
            <person name="Wray P.W."/>
            <person name="Young L."/>
            <person name="Ashurst J.L."/>
            <person name="Coulson A."/>
            <person name="Blocker H."/>
            <person name="Durbin R.M."/>
            <person name="Sulston J.E."/>
            <person name="Hubbard T."/>
            <person name="Jackson M.J."/>
            <person name="Bentley D.R."/>
            <person name="Beck S."/>
            <person name="Rogers J."/>
            <person name="Dunham I."/>
        </authorList>
    </citation>
    <scope>NUCLEOTIDE SEQUENCE [LARGE SCALE GENOMIC DNA]</scope>
</reference>
<reference key="7">
    <citation type="journal article" date="1994" name="Gene">
        <title>Cloning and sequence analysis of additional splice variants encoding human N-methyl-D-aspartate receptor (hNR1) subunits.</title>
        <authorList>
            <person name="Foldes R.L."/>
            <person name="Rampersad V."/>
            <person name="Kamboj R.K."/>
        </authorList>
    </citation>
    <scope>NUCLEOTIDE SEQUENCE [MRNA] OF 332-922 (ISOFORM 4)</scope>
    <scope>NUCLEOTIDE SEQUENCE [MRNA] OF 86-259 (ISOFORM 5)</scope>
    <source>
        <tissue>Cerebellum</tissue>
        <tissue>Hippocampus</tissue>
    </source>
</reference>
<reference key="8">
    <citation type="journal article" date="1993" name="Proc. Natl. Acad. Sci. U.S.A.">
        <title>Inducible expression of neuronal glutamate receptor channels in the NT2 human cell line.</title>
        <authorList>
            <person name="Younkin D.P."/>
            <person name="Tang C.-M."/>
            <person name="Hardy M."/>
            <person name="Reddy U.R."/>
            <person name="Shi Q.-Y."/>
            <person name="Pleasure S.J."/>
            <person name="Lee V.M.-Y."/>
            <person name="Pleasure D."/>
        </authorList>
    </citation>
    <scope>NUCLEOTIDE SEQUENCE [MRNA] OF 364-464 (ISOFORMS 1/2/3)</scope>
    <scope>FUNCTION</scope>
    <scope>TRANSPORTER ACTIVITY</scope>
</reference>
<reference key="9">
    <citation type="journal article" date="1993" name="Nature">
        <title>Regulation of NMDA receptor phosphorylation by alternative splicing of the C-terminal domain.</title>
        <authorList>
            <person name="Tingley W.G."/>
            <person name="Roche K.W."/>
            <person name="Thompson A.K."/>
            <person name="Huganir R.L."/>
        </authorList>
    </citation>
    <scope>PHOSPHORYLATION AT SER-889; SER-890; SER-896 AND SER-897 BY PKC</scope>
</reference>
<reference key="10">
    <citation type="journal article" date="2008" name="NeuroReport">
        <title>GRINL1A colocalizes with N-methyl D-aspartate receptor NR1 subunit and reduces N-methyl D-aspartate toxicity.</title>
        <authorList>
            <person name="Roginski R.S."/>
            <person name="Goubaeva F."/>
            <person name="Mikami M."/>
            <person name="Fried-Cassorla E."/>
            <person name="Nair M.R."/>
            <person name="Yang J."/>
        </authorList>
    </citation>
    <scope>INTERACTION WITH MYZAP</scope>
</reference>
<reference key="11">
    <citation type="journal article" date="2016" name="EMBO J.">
        <title>Synaptonuclear messenger PRR7 inhibits c-Jun ubiquitination and regulates NMDA-mediated excitotoxicity.</title>
        <authorList>
            <person name="Kravchick D.O."/>
            <person name="Karpova A."/>
            <person name="Hrdinka M."/>
            <person name="Lopez-Rojas J."/>
            <person name="Iacobas S."/>
            <person name="Carbonell A.U."/>
            <person name="Iacobas D.A."/>
            <person name="Kreutz M.R."/>
            <person name="Jordan B.A."/>
        </authorList>
    </citation>
    <scope>IDENTIFICATION IN A COMPLEX WITH GRIN2B AND PRR7</scope>
    <scope>INTERACTION WITH PRR7</scope>
</reference>
<reference key="12">
    <citation type="journal article" date="2017" name="Mol. Pharmacol.">
        <title>Functional evaluation of a de novo GRIN2A mutation identified in a patient with profound global developmental delay and refractory epilepsy.</title>
        <authorList>
            <person name="Chen W."/>
            <person name="Tankovic A."/>
            <person name="Burger P.B."/>
            <person name="Kusumoto H."/>
            <person name="Traynelis S.F."/>
            <person name="Yuan H."/>
        </authorList>
    </citation>
    <scope>FUNCTION</scope>
    <scope>TRANSPORTER ACTIVITY</scope>
    <scope>SUBCELLULAR LOCATION</scope>
    <scope>SUBUNIT</scope>
    <scope>MUTAGENESIS OF MET-813</scope>
</reference>
<reference evidence="49" key="13">
    <citation type="journal article" date="1999" name="Nat. Struct. Biol.">
        <title>Structures of the M2 channel-lining segments from nicotinic acetylcholine and NMDA receptors by NMR spectroscopy.</title>
        <authorList>
            <person name="Opella S.J."/>
            <person name="Marassi F.M."/>
            <person name="Gesell J.J."/>
            <person name="Valente A.P."/>
            <person name="Kim Y."/>
            <person name="Oblatt-Montal M."/>
            <person name="Montal M."/>
        </authorList>
    </citation>
    <scope>STRUCTURE BY NMR OF 599-621</scope>
</reference>
<reference evidence="54 55 57" key="14">
    <citation type="journal article" date="2016" name="J. Med. Chem.">
        <title>Discovery of GluN2A-Selective NMDA Receptor Positive Allosteric Modulators (PAMs): Tuning Deactivation Kinetics via Structure-Based Design.</title>
        <authorList>
            <person name="Volgraf M."/>
            <person name="Sellers B.D."/>
            <person name="Jiang Y."/>
            <person name="Wu G."/>
            <person name="Ly C.Q."/>
            <person name="Villemure E."/>
            <person name="Pastor R.M."/>
            <person name="Yuen P.W."/>
            <person name="Lu A."/>
            <person name="Luo X."/>
            <person name="Liu M."/>
            <person name="Zhang S."/>
            <person name="Sun L."/>
            <person name="Fu Y."/>
            <person name="Lupardus P.J."/>
            <person name="Wallweber H.J."/>
            <person name="Liederer B.M."/>
            <person name="Deshmukh G."/>
            <person name="Plise E."/>
            <person name="Tay S."/>
            <person name="Reynen P."/>
            <person name="Herrington J."/>
            <person name="Gustafson A."/>
            <person name="Liu Y."/>
            <person name="Dirksen A."/>
            <person name="Dietz M.G."/>
            <person name="Liu Y."/>
            <person name="Wang T.M."/>
            <person name="Hanson J.E."/>
            <person name="Hackos D."/>
            <person name="Scearce-Levie K."/>
            <person name="Schwarz J.B."/>
        </authorList>
    </citation>
    <scope>X-RAY CRYSTALLOGRAPHY (2.12 ANGSTROMS) OF 394-544 AND 663-800 IN COMPLEXES WITH GRIN2A AND GLYCINE</scope>
    <scope>FUNCTION</scope>
    <scope>TRANSPORTER ACTIVITY</scope>
    <scope>SUBCELLULAR LOCATION</scope>
    <scope>SUBUNIT</scope>
    <scope>DISULFIDE BONDS</scope>
    <scope>DOMAIN</scope>
</reference>
<reference evidence="50 51 52 53 56" key="15">
    <citation type="journal article" date="2016" name="Neuron">
        <title>Positive Allosteric Modulators of GluN2A-Containing NMDARs with Distinct Modes of Action and Impacts on Circuit Function.</title>
        <authorList>
            <person name="Hackos D.H."/>
            <person name="Lupardus P.J."/>
            <person name="Grand T."/>
            <person name="Chen Y."/>
            <person name="Wang T.M."/>
            <person name="Reynen P."/>
            <person name="Gustafson A."/>
            <person name="Wallweber H.J."/>
            <person name="Volgraf M."/>
            <person name="Sellers B.D."/>
            <person name="Schwarz J.B."/>
            <person name="Paoletti P."/>
            <person name="Sheng M."/>
            <person name="Zhou Q."/>
            <person name="Hanson J.E."/>
        </authorList>
    </citation>
    <scope>X-RAY CRYSTALLOGRAPHY (1.81 ANGSTROMS) OF 394-544 AND 663-800 IN COMPLEXES WITH GRIN2A AND GLYCINE</scope>
    <scope>FUNCTION</scope>
    <scope>TRANSPORTER ACTIVITY</scope>
    <scope>SUBUNIT</scope>
    <scope>SUBCELLULAR LOCATION</scope>
    <scope>DISULFIDE BONDS</scope>
    <scope>DOMAIN</scope>
</reference>
<reference evidence="58 59" key="16">
    <citation type="journal article" date="2017" name="ACS Med. Chem. Lett.">
        <title>GluN2A-Selective Pyridopyrimidinone Series of NMDAR Positive Allosteric Modulators with an Improved in Vivo Profile.</title>
        <authorList>
            <person name="Villemure E."/>
            <person name="Volgraf M."/>
            <person name="Jiang Y."/>
            <person name="Wu G."/>
            <person name="Ly C.Q."/>
            <person name="Yuen P.W."/>
            <person name="Lu A."/>
            <person name="Luo X."/>
            <person name="Liu M."/>
            <person name="Zhang S."/>
            <person name="Lupardus P.J."/>
            <person name="Wallweber H.J."/>
            <person name="Liederer B.M."/>
            <person name="Deshmukh G."/>
            <person name="Plise E."/>
            <person name="Tay S."/>
            <person name="Wang T.M."/>
            <person name="Hanson J.E."/>
            <person name="Hackos D.H."/>
            <person name="Scearce-Levie K."/>
            <person name="Schwarz J.B."/>
            <person name="Sellers B.D."/>
        </authorList>
    </citation>
    <scope>X-RAY CRYSTALLOGRAPHY (2.40 ANGSTROMS) OF 394-544 AND 663-800 IN COMPLEX WITH GRIN2A AND GLYCINE</scope>
    <scope>FUNCTION</scope>
    <scope>SUBCELLULAR LOCATION</scope>
    <scope>SUBUNIT</scope>
    <scope>DISULFIDE BONDS</scope>
    <scope>DOMAIN</scope>
</reference>
<reference evidence="65 66" key="17">
    <citation type="journal article" date="2021" name="Nature">
        <title>Structural basis of ketamine action on human NMDA receptors.</title>
        <authorList>
            <person name="Zhang Y."/>
            <person name="Ye F."/>
            <person name="Zhang T."/>
            <person name="Lv S."/>
            <person name="Zhou L."/>
            <person name="Du D."/>
            <person name="Lin H."/>
            <person name="Guo F."/>
            <person name="Luo C."/>
            <person name="Zhu S."/>
        </authorList>
    </citation>
    <scope>STRUCTURE BY ELECTRON MICROSCOPY (3.50 ANGSTROMS) OF 1-847</scope>
</reference>
<reference evidence="60 61 62 63 64" key="18">
    <citation type="journal article" date="2021" name="Neuron">
        <title>Gating mechanism and a modulatory niche of human GluN1-GluN2A NMDA receptors.</title>
        <authorList>
            <person name="Wang H."/>
            <person name="Lv S."/>
            <person name="Stroebel D."/>
            <person name="Zhang J."/>
            <person name="Pan Y."/>
            <person name="Huang X."/>
            <person name="Zhang X."/>
            <person name="Paoletti P."/>
            <person name="Zhu S."/>
        </authorList>
    </citation>
    <scope>STRUCTURE BY ELECTRON MICROSCOPY (3.80 ANGSTROMS) OF 1-847 IN COMPLEX WITH GRIN2A</scope>
    <scope>SUBUNIT</scope>
    <scope>TOPOLOGY</scope>
    <scope>GLYCOSYLATION AT ASN-276; ASN-471 AND ASN-771</scope>
</reference>
<reference evidence="72 73 74 75 76 77" key="19">
    <citation type="journal article" date="2022" name="Mol. Cell">
        <title>Structural insights into assembly and function of GluN1-2C, GluN1-2A-2C, and GluN1-2D NMDARs.</title>
        <authorList>
            <person name="Chou T.H."/>
            <person name="Kang H."/>
            <person name="Simorowski N."/>
            <person name="Traynelis S.F."/>
            <person name="Furukawa H."/>
        </authorList>
    </citation>
    <scope>STRUCTURE BY ELECTRON MICROSCOPY (3.38 ANGSTROMS) OF 19-847 IN COMPLEX WITH GRIN2A; GRIN2C; GRIN2D AND GLYCINE</scope>
    <scope>SUBUNIT</scope>
    <scope>DISULFIDE BOND</scope>
    <scope>DOMAIN</scope>
    <scope>GLYCOSYLATION AT ASN-61; ASN-203; ASN-239; ASN-276; ASN-350; ASN-368; ASN-471 AND ASN-771</scope>
</reference>
<reference evidence="67 68 69 70 71" key="20">
    <citation type="journal article" date="2023" name="Nat. Struct. Mol. Biol.">
        <title>Distinct structure and gating mechanism in diverse NMDA receptors with GluN2C and GluN2D subunits.</title>
        <authorList>
            <person name="Zhang J."/>
            <person name="Zhang M."/>
            <person name="Wang Q."/>
            <person name="Wen H."/>
            <person name="Liu Z."/>
            <person name="Wang F."/>
            <person name="Wang Y."/>
            <person name="Yao F."/>
            <person name="Song N."/>
            <person name="Kou Z."/>
            <person name="Li Y."/>
            <person name="Guo F."/>
            <person name="Zhu S."/>
        </authorList>
    </citation>
    <scope>STRUCTURE BY ELECTRON MICROSCOPY (3.60 ANGSTROMS) OF 1-840 IN COMPLEX WITH GRIN2A; GRIN2C; GRIN2D AND GLYCINE</scope>
    <scope>DISULFIDE BONDS</scope>
    <scope>GLYCOSYLATION AT ASN-203 AND ASN-471</scope>
    <scope>FUNCTION</scope>
    <scope>SUBUNIT</scope>
</reference>
<reference evidence="78" key="21">
    <citation type="journal article" date="2024" name="Sci. Adv.">
        <title>Structure and function of GluN1-3A NMDA receptor excitatory glycine receptor channel.</title>
        <authorList>
            <person name="Michalski K."/>
            <person name="Furukawa H."/>
        </authorList>
    </citation>
    <scope>STRUCTURE BY ELECTRON MICROSCOPY (3.96 ANGSTROMS) OF 395-798 IN COMPLEX WITH GRIN3A</scope>
    <scope>DISULFIDE BOND</scope>
    <scope>FUNCTION</scope>
</reference>
<reference key="22">
    <citation type="journal article" date="2011" name="Am. J. Hum. Genet.">
        <title>Excess of de novo deleterious mutations in genes associated with glutamatergic systems in nonsyndromic intellectual disability.</title>
        <authorList>
            <person name="Hamdan F.F."/>
            <person name="Gauthier J."/>
            <person name="Araki Y."/>
            <person name="Lin D.T."/>
            <person name="Yoshizawa Y."/>
            <person name="Higashi K."/>
            <person name="Park A.R."/>
            <person name="Spiegelman D."/>
            <person name="Dobrzeniecka S."/>
            <person name="Piton A."/>
            <person name="Tomitori H."/>
            <person name="Daoud H."/>
            <person name="Massicotte C."/>
            <person name="Henrion E."/>
            <person name="Diallo O."/>
            <person name="Shekarabi M."/>
            <person name="Marineau C."/>
            <person name="Shevell M."/>
            <person name="Maranda B."/>
            <person name="Mitchell G."/>
            <person name="Nadeau A."/>
            <person name="D'Anjou G."/>
            <person name="Vanasse M."/>
            <person name="Srour M."/>
            <person name="Lafreniere R.G."/>
            <person name="Drapeau P."/>
            <person name="Lacaille J.C."/>
            <person name="Kim E."/>
            <person name="Lee J.R."/>
            <person name="Igarashi K."/>
            <person name="Huganir R.L."/>
            <person name="Rouleau G.A."/>
            <person name="Michaud J.L."/>
        </authorList>
    </citation>
    <scope>VARIANTS NDHMSD SER-560 INS AND LYS-662</scope>
    <scope>CHARACTERIZATION OF VARIANTS NDHMSD SER-560 INS AND LYS-662</scope>
    <scope>FUNCTION</scope>
    <scope>TRANSPORTER ACTIVITY</scope>
</reference>
<reference key="23">
    <citation type="journal article" date="2011" name="Transl. Psychiatry">
        <title>Rare mutations in N-methyl-D-aspartate glutamate receptors in autism spectrum disorders and schizophrenia.</title>
        <authorList>
            <consortium name="S2D team"/>
            <person name="Tarabeux J."/>
            <person name="Kebir O."/>
            <person name="Gauthier J."/>
            <person name="Hamdan F.F."/>
            <person name="Xiong L."/>
            <person name="Piton A."/>
            <person name="Spiegelman D."/>
            <person name="Henrion E."/>
            <person name="Millet B."/>
            <person name="Fathalli F."/>
            <person name="Joober R."/>
            <person name="Rapoport J.L."/>
            <person name="DeLisi L.E."/>
            <person name="Fombonne E."/>
            <person name="Mottron L."/>
            <person name="Forget-Dubois N."/>
            <person name="Boivin M."/>
            <person name="Michaud J.L."/>
            <person name="Drapeau P."/>
            <person name="Lafreniere R.G."/>
            <person name="Rouleau G.A."/>
            <person name="Krebs M.O."/>
        </authorList>
    </citation>
    <scope>VARIANTS GLN-306; SER-349 AND ALA-419</scope>
</reference>
<reference key="24">
    <citation type="journal article" date="2014" name="J. Med. Genet.">
        <title>Efficient strategy for the molecular diagnosis of intellectual disability using targeted high-throughput sequencing.</title>
        <authorList>
            <person name="Redin C."/>
            <person name="Gerard B."/>
            <person name="Lauer J."/>
            <person name="Herenger Y."/>
            <person name="Muller J."/>
            <person name="Quartier A."/>
            <person name="Masurel-Paulet A."/>
            <person name="Willems M."/>
            <person name="Lesca G."/>
            <person name="El-Chehadeh S."/>
            <person name="Le Gras S."/>
            <person name="Vicaire S."/>
            <person name="Philipps M."/>
            <person name="Dumas M."/>
            <person name="Geoffroy V."/>
            <person name="Feger C."/>
            <person name="Haumesser N."/>
            <person name="Alembik Y."/>
            <person name="Barth M."/>
            <person name="Bonneau D."/>
            <person name="Colin E."/>
            <person name="Dollfus H."/>
            <person name="Doray B."/>
            <person name="Delrue M.A."/>
            <person name="Drouin-Garraud V."/>
            <person name="Flori E."/>
            <person name="Fradin M."/>
            <person name="Francannet C."/>
            <person name="Goldenberg A."/>
            <person name="Lumbroso S."/>
            <person name="Mathieu-Dramard M."/>
            <person name="Martin-Coignard D."/>
            <person name="Lacombe D."/>
            <person name="Morin G."/>
            <person name="Polge A."/>
            <person name="Sukno S."/>
            <person name="Thauvin-Robinet C."/>
            <person name="Thevenon J."/>
            <person name="Doco-Fenzy M."/>
            <person name="Genevieve D."/>
            <person name="Sarda P."/>
            <person name="Edery P."/>
            <person name="Isidor B."/>
            <person name="Jost B."/>
            <person name="Olivier-Faivre L."/>
            <person name="Mandel J.L."/>
            <person name="Piton A."/>
        </authorList>
    </citation>
    <scope>VARIANT NDHMSD ARG-557</scope>
</reference>
<reference key="25">
    <citation type="journal article" date="2015" name="Epilepsia">
        <title>GRIN1 mutations cause encephalopathy with infantile-onset epilepsy, and hyperkinetic and stereotyped movement disorders.</title>
        <authorList>
            <person name="Ohba C."/>
            <person name="Shiina M."/>
            <person name="Tohyama J."/>
            <person name="Haginoya K."/>
            <person name="Lerman-Sagie T."/>
            <person name="Okamoto N."/>
            <person name="Blumkin L."/>
            <person name="Lev D."/>
            <person name="Mukaida S."/>
            <person name="Nozaki F."/>
            <person name="Uematsu M."/>
            <person name="Onuma A."/>
            <person name="Kodera H."/>
            <person name="Nakashima M."/>
            <person name="Tsurusaki Y."/>
            <person name="Miyake N."/>
            <person name="Tanaka F."/>
            <person name="Kato M."/>
            <person name="Ogata K."/>
            <person name="Saitsu H."/>
            <person name="Matsumoto N."/>
        </authorList>
    </citation>
    <scope>VARIANTS NDHMSD GLU-552; ILE-641; LYS-650 AND ARG-815</scope>
</reference>
<reference key="26">
    <citation type="journal article" date="2016" name="Neurology">
        <title>Delineating the GRIN1 phenotypic spectrum: A distinct genetic NMDA receptor encephalopathy.</title>
        <authorList>
            <person name="Lemke J.R."/>
            <person name="Geider K."/>
            <person name="Helbig K.L."/>
            <person name="Heyne H.O."/>
            <person name="Schuetz H."/>
            <person name="Hentschel J."/>
            <person name="Courage C."/>
            <person name="Depienne C."/>
            <person name="Nava C."/>
            <person name="Heron D."/>
            <person name="Moeller R.S."/>
            <person name="Hjalgrim H."/>
            <person name="Lal D."/>
            <person name="Neubauer B.A."/>
            <person name="Nuernberg P."/>
            <person name="Thiele H."/>
            <person name="Kurlemann G."/>
            <person name="Arnold G.L."/>
            <person name="Bhambhani V."/>
            <person name="Bartholdi D."/>
            <person name="Pedurupillay C.R."/>
            <person name="Misceo D."/>
            <person name="Frengen E."/>
            <person name="Stroemme P."/>
            <person name="Dlugos D.J."/>
            <person name="Doherty E.S."/>
            <person name="Bijlsma E.K."/>
            <person name="Ruivenkamp C.A."/>
            <person name="Hoffer M.J."/>
            <person name="Goldstein A."/>
            <person name="Rajan D.S."/>
            <person name="Narayanan V."/>
            <person name="Ramsey K."/>
            <person name="Belnap N."/>
            <person name="Schrauwen I."/>
            <person name="Richholt R."/>
            <person name="Koeleman B.P."/>
            <person name="Sa J."/>
            <person name="Mendonca C."/>
            <person name="de Kovel C.G."/>
            <person name="Weckhuysen S."/>
            <person name="Hardies K."/>
            <person name="De Jonghe P."/>
            <person name="De Meirleir L."/>
            <person name="Milh M."/>
            <person name="Badens C."/>
            <person name="Lebrun M."/>
            <person name="Busa T."/>
            <person name="Francannet C."/>
            <person name="Piton A."/>
            <person name="Riesch E."/>
            <person name="Biskup S."/>
            <person name="Vogt H."/>
            <person name="Dorn T."/>
            <person name="Helbig I."/>
            <person name="Michaud J.L."/>
            <person name="Laube B."/>
            <person name="Syrbe S."/>
        </authorList>
    </citation>
    <scope>VARIANTS NDHMSD GLU-552; ARG-557; ARG-618; ARG-620; SER-645; SER-647; ARG-815; VAL-815; LEU-817; ARG-827 AND CYS-844</scope>
    <scope>VARIANT NDHMSR TRP-217</scope>
    <scope>VARIANT DEE101 556-GLN--SER-938 DEL</scope>
    <scope>CHARACTERIZATION OF VARIANTS NDHMSD ARG-557; ARG-618; ARG-620; SER-645; SER-647; ARG-815; LEU-817; ARG-827 AND CYS-844</scope>
    <scope>CHARACTERIZATION OF VARIANT NDHMSR TRP-217</scope>
    <scope>CHARACTERIZATION OF VARIANT DEE101 556-GLN--SER-938 DEL</scope>
    <scope>FUNCTION</scope>
</reference>
<reference key="27">
    <citation type="journal article" date="2017" name="Eur. J. Hum. Genet.">
        <title>Novel homozygous missense variant of GRIN1 in two sibs with intellectual disability and autistic features without epilepsy.</title>
        <authorList>
            <person name="Rossi M."/>
            <person name="Chatron N."/>
            <person name="Labalme A."/>
            <person name="Ville D."/>
            <person name="Carneiro M."/>
            <person name="Edery P."/>
            <person name="des Portes V."/>
            <person name="Lemke J.R."/>
            <person name="Sanlaville D."/>
            <person name="Lesca G."/>
        </authorList>
    </citation>
    <scope>VARIANT NDHMSR HIS-227</scope>
</reference>
<reference key="28">
    <citation type="journal article" date="2017" name="Eur. J. Med. Genet.">
        <title>De novo GRIN1 mutations: An emerging cause of severe early infantile encephalopathy.</title>
        <authorList>
            <person name="Zehavi Y."/>
            <person name="Mandel H."/>
            <person name="Zehavi A."/>
            <person name="Rashid M.A."/>
            <person name="Straussberg R."/>
            <person name="Jabur B."/>
            <person name="Shaag A."/>
            <person name="Elpeleg O."/>
            <person name="Spiegel R."/>
        </authorList>
    </citation>
    <scope>VARIANTS NDHMSD TYR-688 AND ARG-827</scope>
</reference>
<reference key="29">
    <citation type="journal article" date="2017" name="J. Hum. Genet.">
        <title>GRIN1 mutation associated with intellectual disability alters NMDA receptor trafficking and function.</title>
        <authorList>
            <person name="Chen W."/>
            <person name="Shieh C."/>
            <person name="Swanger S.A."/>
            <person name="Tankovic A."/>
            <person name="Au M."/>
            <person name="McGuire M."/>
            <person name="Tagliati M."/>
            <person name="Graham J.M."/>
            <person name="Madan-Khetarpal S."/>
            <person name="Traynelis S.F."/>
            <person name="Yuan H."/>
            <person name="Pierson T.M."/>
        </authorList>
    </citation>
    <scope>VARIANT NDHMSD ARG-620</scope>
    <scope>CHARACTERIZATION OF VARIANT NDHMSD ARG-620</scope>
    <scope>FUNCTION</scope>
    <scope>SUBCELLULAR LOCATION</scope>
</reference>
<reference key="30">
    <citation type="journal article" date="2017" name="PLoS Genet.">
        <title>Molecular mechanism of disease-associated mutations in the pre-M1 helix of NMDA receptors and potential rescue pharmacology.</title>
        <authorList>
            <person name="Ogden K.K."/>
            <person name="Chen W."/>
            <person name="Swanger S.A."/>
            <person name="McDaniel M.J."/>
            <person name="Fan L.Z."/>
            <person name="Hu C."/>
            <person name="Tankovic A."/>
            <person name="Kusumoto H."/>
            <person name="Kosobucki G.J."/>
            <person name="Schulien A.J."/>
            <person name="Su Z."/>
            <person name="Pecha J."/>
            <person name="Bhattacharya S."/>
            <person name="Petrovski S."/>
            <person name="Cohen A.E."/>
            <person name="Aizenman E."/>
            <person name="Traynelis S.F."/>
            <person name="Yuan H."/>
        </authorList>
    </citation>
    <scope>CHARACTERIZATION OF VARIANT NDHMSD GLU-552 AND ARG-557</scope>
    <scope>FUNCTION</scope>
    <scope>SUBCELLULAR LOCATION</scope>
</reference>
<reference key="31">
    <citation type="journal article" date="2022" name="Am. J. Med. Genet. A">
        <title>A homozygous GRIN1 null variant causes a more severe phenotype of early infantile epileptic encephalopathy.</title>
        <authorList>
            <person name="Blakes A.J.M."/>
            <person name="English J."/>
            <person name="Banka S."/>
            <person name="Basu H."/>
        </authorList>
    </citation>
    <scope>INVOLVEMENT IN DEE101</scope>
</reference>
<reference key="32">
    <citation type="journal article" date="2024" name="Cell. Mol. Life Sci.">
        <title>De novo GRIN variants in M3 helix associated with neurological disorders control channel gating of NMDA receptor.</title>
        <authorList>
            <person name="Xu Y."/>
            <person name="Song R."/>
            <person name="Perszyk R.E."/>
            <person name="Chen W."/>
            <person name="Kim S."/>
            <person name="Park K.L."/>
            <person name="Allen J.P."/>
            <person name="Nocilla K.A."/>
            <person name="Zhang J."/>
            <person name="Xiang Wei W."/>
            <person name="Tankovic A."/>
            <person name="McDaniels E.D."/>
            <person name="Sheikh R."/>
            <person name="Mizu R.K."/>
            <person name="Karamchandani M.M."/>
            <person name="Hu C."/>
            <person name="Kusumoto H."/>
            <person name="Pecha J."/>
            <person name="Cappuccio G."/>
            <person name="Gaitanis J."/>
            <person name="Sullivan J."/>
            <person name="Shashi V."/>
            <person name="Petrovski S."/>
            <person name="Jauss R.T."/>
            <person name="Lee H.K."/>
            <person name="Bozarth X."/>
            <person name="Lynch D.R."/>
            <person name="Helbig I."/>
            <person name="Pierson T.M."/>
            <person name="Boerkoel C.F."/>
            <person name="Myers S.J."/>
            <person name="Lemke J.R."/>
            <person name="Benke T.A."/>
            <person name="Yuan H."/>
            <person name="Traynelis S.F."/>
        </authorList>
    </citation>
    <scope>VARIANTS NDHMSD SER-637; VAL-637; ALA-638; VAL-638; ILE-641; LEU-641; VAL-641; THR-642; VAL-643; CYS-647; SER-647; ILE-650; LYS-650; THR-652; THR-653; CYS-654 AND GLN-655</scope>
    <scope>CHARACTERIZATION OF VARIANTS NDHMSD VAL-637; VAL-638; ILE-641; THR-642; CYS-647; SER-647; ILE-650; LYS-650; THR-653; CYS-654 AND GLN-655</scope>
    <scope>MUTAGENESIS OF ILE-642; VAL-644 AND ALA-653</scope>
    <scope>FUNCTION</scope>
    <scope>SUBCELLULAR LOCATION</scope>
</reference>
<name>NMDZ1_HUMAN</name>
<comment type="function">
    <text evidence="3 8 12 13 14 17 18 19 20 24 25 26 27 28 29 30">Component of N-methyl-D-aspartate (NMDA) receptors (NMDARs) that function as heterotetrameric, ligand-gated cation channels with high calcium permeability and voltage-dependent block by Mg(2+) (PubMed:21376300, PubMed:26875626, PubMed:26919761, PubMed:28126851, PubMed:28228639, PubMed:36959261, PubMed:7679115, PubMed:7681588, PubMed:7685113). NMDARs participate in synaptic plasticity for learning and memory formation by contributing to the long-term potentiation (LTP) (PubMed:26875626). Channel activation requires binding of the neurotransmitter L-glutamate to the GluN2 subunit, glycine or D-serine binding to the GluN1 subunit, plus membrane depolarization to eliminate channel inhibition by Mg(2+) (PubMed:21376300, PubMed:26875626, PubMed:26919761, PubMed:27164704, PubMed:28095420, PubMed:28105280, PubMed:28126851, PubMed:28228639, PubMed:36959261, PubMed:38538865, PubMed:7679115, PubMed:7681588, PubMed:7685113). NMDARs mediate simultaneously the potasium efflux and the influx of calcium and sodium (By similarity). Each GluN2 or GluN3 subunit confers differential attributes to channel properties, including activation, deactivation and desensitization kinetics, pH sensitivity, Ca2(+) permeability, and binding to allosteric modulators (PubMed:26875626, PubMed:26919761, PubMed:36309015, PubMed:38598639).</text>
</comment>
<comment type="catalytic activity">
    <reaction evidence="8 12 13 19 26 28 29 30">
        <text>Ca(2+)(in) = Ca(2+)(out)</text>
        <dbReference type="Rhea" id="RHEA:29671"/>
        <dbReference type="ChEBI" id="CHEBI:29108"/>
    </reaction>
</comment>
<comment type="catalytic activity">
    <reaction evidence="8 26">
        <text>Na(+)(in) = Na(+)(out)</text>
        <dbReference type="Rhea" id="RHEA:34963"/>
        <dbReference type="ChEBI" id="CHEBI:29101"/>
    </reaction>
</comment>
<comment type="catalytic activity">
    <reaction evidence="3">
        <text>K(+)(in) = K(+)(out)</text>
        <dbReference type="Rhea" id="RHEA:29463"/>
        <dbReference type="ChEBI" id="CHEBI:29103"/>
    </reaction>
</comment>
<comment type="activity regulation">
    <text evidence="28 29 30">NMDA glutamate receptor activity is inhbited by Mg2(+) in a voltage-dependent manner; Mg2(+)-induced blockade occurs only at negative potentials and decreases with membrane depolarization (PubMed:7679115, PubMed:7681588, PubMed:7685113). 7-chlorokynurenate (50 uM) or Zn2(+) (100 uM) partially inhibit the NMDA glutamate receptor activity, while acide 2-amino-5-phosphonovalerique(100 uM) almost completely blocked the NMDA glutamate receptor activity (PubMed:7679115, PubMed:7685113). Dizocilpine (1 uM) results in long lasting and almost complete block of the NMDA glutamate receptor activity (PubMed:7679115, PubMed:7685113).</text>
</comment>
<comment type="subunit">
    <text evidence="3 4 7 12 13 15 18 19 22 24 25 27 30">Heterotetramer; the NMDAR subunits are modular and harbor tiered domains that function in concert to regulate opening and closing of the cation-selective ion channel pore (PubMed:36309015, PubMed:38598639). Forms heterotetrameric channels composed of two GluN1/zeta subunits (GRIN1), and two identical GluN2/epsilon subunits (GRIN2A, GRIN2B, GRIN2C or GRIN2D) or GluN3 subunits (GRIN3A or GRIN3B) (in vitro) (PubMed:26875626, PubMed:26919761, PubMed:28105280, PubMed:28126851, PubMed:34186027, PubMed:36309015, PubMed:36959261, PubMed:7685113). Can also form heterotetrameric channels that contain at least two GluN1 subunits and at least two different GluN2 subunits (or a combination of one GluN2 and one GluN3 subunits) (in vitro) (PubMed:36309015). In vivo, the subunit composition may vary in function of the expression levels of the different subunits (By similarity). Found in a complex with GRIN2A or GRIN2B, GRIN3A and PPP2CB (By similarity). Found in a complex with GRIN2A or GRIN2B and GRIN3B (By similarity). Interacts with SNX27 (via PDZ domain); the interaction is required for recycling to the plasma membrane when endocytosed and prevent degradation in lysosomes (By similarity). Interacts with DLG4 and MPDZ. Interacts with LRFN1 and LRFN2 (By similarity). Interacts with MYZAP (PubMed:18849881). Found in a complex with DLG4 and PRR7 (By similarity). Found in a complex with GRIN2B and PRR7 (PubMed:27458189). Interacts with PRR7; the interaction is reduced following NMDA receptor activity (PubMed:27458189).</text>
</comment>
<comment type="interaction">
    <interactant intactId="EBI-998542">
        <id>Q05586</id>
    </interactant>
    <interactant intactId="EBI-77613">
        <id>P05067</id>
        <label>APP</label>
    </interactant>
    <organismsDiffer>false</organismsDiffer>
    <experiments>3</experiments>
</comment>
<comment type="interaction">
    <interactant intactId="EBI-998542">
        <id>Q05586</id>
    </interactant>
    <interactant intactId="EBI-400434">
        <id>P35637</id>
        <label>FUS</label>
    </interactant>
    <organismsDiffer>false</organismsDiffer>
    <experiments>3</experiments>
</comment>
<comment type="interaction">
    <interactant intactId="EBI-27070564">
        <id>Q05586-1</id>
    </interactant>
    <interactant intactId="EBI-27070593">
        <id>Q12879-1</id>
        <label>GRIN2A</label>
    </interactant>
    <organismsDiffer>false</organismsDiffer>
    <experiments>2</experiments>
</comment>
<comment type="interaction">
    <interactant intactId="EBI-27070564">
        <id>Q05586-1</id>
    </interactant>
    <interactant intactId="EBI-2256942">
        <id>Q13224</id>
        <label>GRIN2B</label>
    </interactant>
    <organismsDiffer>false</organismsDiffer>
    <experiments>2</experiments>
</comment>
<comment type="interaction">
    <interactant intactId="EBI-8286218">
        <id>Q05586-2</id>
    </interactant>
    <interactant intactId="EBI-349596">
        <id>Q62936</id>
        <label>Dlg3</label>
    </interactant>
    <organismsDiffer>true</organismsDiffer>
    <experiments>3</experiments>
</comment>
<comment type="subcellular location">
    <subcellularLocation>
        <location evidence="12 13 17 18 19 20 26 30">Cell membrane</location>
        <topology evidence="4">Multi-pass membrane protein</topology>
    </subcellularLocation>
    <subcellularLocation>
        <location evidence="3">Postsynaptic cell membrane</location>
    </subcellularLocation>
    <subcellularLocation>
        <location evidence="4">Postsynaptic density membrane</location>
    </subcellularLocation>
    <subcellularLocation>
        <location evidence="3">Synaptic cell membrane</location>
    </subcellularLocation>
    <text evidence="1 3 4">Synaptic cell membrane targeting is dependent of GRIN2B/GluN2B subunit (By similarity). Association with GRIN3A occurs in the endoplasmic reticulum (By similarity).</text>
</comment>
<comment type="alternative products">
    <event type="alternative splicing"/>
    <isoform>
        <id>Q05586-1</id>
        <name>3</name>
        <name>Long</name>
        <name>NR1-3</name>
        <sequence type="displayed"/>
    </isoform>
    <isoform>
        <id>Q05586-2</id>
        <name>1</name>
        <name>Short</name>
        <name>NR1-1</name>
        <sequence type="described" ref="VSP_000137 VSP_000138"/>
    </isoform>
    <isoform>
        <id>Q05586-3</id>
        <name>2</name>
        <name>Medium</name>
        <name>NR1-2</name>
        <sequence type="described" ref="VSP_000139"/>
    </isoform>
    <isoform>
        <id>Q05586-4</id>
        <name>4</name>
        <sequence type="described" ref="VSP_011778 VSP_011779"/>
    </isoform>
    <isoform>
        <id>Q05586-5</id>
        <name>5</name>
        <sequence type="described" ref="VSP_011777"/>
    </isoform>
    <isoform>
        <id>Q05586-6</id>
        <name>6</name>
        <sequence type="described" ref="VSP_011777 VSP_011778 VSP_011779"/>
    </isoform>
    <isoform>
        <id>Q05586-7</id>
        <name>7</name>
        <sequence type="described" ref="VSP_011777 VSP_045464"/>
    </isoform>
</comment>
<comment type="domain">
    <text evidence="2">A hydrophobic region that gives rise to the prediction of a transmembrane span does not cross the membrane, but is part of a discontinuously helical region that dips into the membrane and is probably part of the pore and of the selectivity filter.</text>
</comment>
<comment type="domain">
    <text evidence="12 24">The extracellular N-terminal domain (NTD) is a site of allosteric regulation to modulate overall receptor function.</text>
</comment>
<comment type="domain">
    <text evidence="12 13 18">The ligand-binding domain (LBD) binds to glycine (GluN1 and GluN3 subunits) and glutamate (GluN2 subunits) and control opening of the channel gate.</text>
</comment>
<comment type="domain">
    <text evidence="24">The transmembrane domain (TMD) harbors the channel gate and pore.</text>
</comment>
<comment type="PTM">
    <text evidence="31">NMDA is probably regulated by C-terminal phosphorylation of an isoform of GRIN1 by PKC (PubMed:8316301). Dephosphorylated on Ser-897 probably by protein phosphatase 2A (PPP2CB) (PubMed:8316301). Its phosphorylated state is influenced by the formation of the NMDAR-PPP2CB complex and the NMDAR channel activity (PubMed:8316301).</text>
</comment>
<comment type="disease" evidence="8 10 11 14 17 20 21 26">
    <disease id="DI-05176">
        <name>Neurodevelopmental disorder with or without hyperkinetic movements and seizures, autosomal dominant</name>
        <acronym>NDHMSD</acronym>
        <description>An autosomal dominant neurodevelopmental disorder characterized by severe intellectual disability and developmental delay, absent speech, muscular hypotonia, dyskinesia, and hyperkinetic movements. Cortical blindness, cerebral atrophy, and seizures are present in some patients.</description>
        <dbReference type="MIM" id="614254"/>
    </disease>
    <text>The disease is caused by variants affecting the gene represented in this entry.</text>
</comment>
<comment type="disease" evidence="14 16">
    <disease id="DI-05175">
        <name>Neurodevelopmental disorder with or without hyperkinetic movements and seizures, autosomal recessive</name>
        <acronym>NDHMSR</acronym>
        <description>An autosomal recessive neurodevelopmental disorder characterized by severe intellectual disability and psychomotor developmental delay, involuntary and stereotypic movements, spasticity, and inability to walk without support. Intractable seizures manifest in some patients.</description>
        <dbReference type="MIM" id="617820"/>
    </disease>
    <text>The disease is caused by variants affecting the gene represented in this entry.</text>
</comment>
<comment type="disease" evidence="14 23">
    <disease id="DI-06373">
        <name>Developmental and epileptic encephalopathy 101</name>
        <acronym>DEE101</acronym>
        <description>A form of epileptic encephalopathy, a heterogeneous group of early-onset epilepsies characterized by refractory seizures, neurodevelopmental impairment, and poor prognosis. Development is normal prior to seizure onset, after which cognitive and motor delays become apparent. DEE101 is an autosomal recessive, severe form characterized by onset of seizures in early infancy. Death in infancy may occur.</description>
        <dbReference type="MIM" id="619814"/>
    </disease>
    <text>The disease is caused by variants affecting the gene represented in this entry.</text>
</comment>
<comment type="similarity">
    <text evidence="38">Belongs to the glutamate-gated ion channel (TC 1.A.10.1) family. NR1/GRIN1 subfamily.</text>
</comment>
<comment type="online information" name="Wikipedia">
    <link uri="https://en.wikipedia.org/wiki/NMDA_receptor"/>
    <text>NMDA receptor entry</text>
</comment>
<proteinExistence type="evidence at protein level"/>
<gene>
    <name evidence="40" type="primary">GRIN1</name>
    <name evidence="33" type="synonym">NMDAR1</name>
</gene>
<accession>Q05586</accession>
<accession>A6NLK7</accession>
<accession>A6NLR1</accession>
<accession>C9K0X1</accession>
<accession>P35437</accession>
<accession>Q12867</accession>
<accession>Q12868</accession>
<accession>Q5VSF3</accession>
<accession>Q5VSF4</accession>
<accession>Q5VSF5</accession>
<accession>Q5VSF6</accession>
<accession>Q5VSF7</accession>
<accession>Q5VSF8</accession>
<accession>Q9UPF8</accession>
<accession>Q9UPF9</accession>
<protein>
    <recommendedName>
        <fullName evidence="38">Glutamate receptor ionotropic, NMDA 1</fullName>
        <shortName>GluN1</shortName>
    </recommendedName>
    <alternativeName>
        <fullName evidence="38">Glutamate [NMDA] receptor subunit zeta-1</fullName>
    </alternativeName>
    <alternativeName>
        <fullName>N-methyl-D-aspartate receptor subunit NR1</fullName>
        <shortName>NMD-R1</shortName>
        <shortName evidence="34 36">hNR1</shortName>
    </alternativeName>
</protein>
<organism>
    <name type="scientific">Homo sapiens</name>
    <name type="common">Human</name>
    <dbReference type="NCBI Taxonomy" id="9606"/>
    <lineage>
        <taxon>Eukaryota</taxon>
        <taxon>Metazoa</taxon>
        <taxon>Chordata</taxon>
        <taxon>Craniata</taxon>
        <taxon>Vertebrata</taxon>
        <taxon>Euteleostomi</taxon>
        <taxon>Mammalia</taxon>
        <taxon>Eutheria</taxon>
        <taxon>Euarchontoglires</taxon>
        <taxon>Primates</taxon>
        <taxon>Haplorrhini</taxon>
        <taxon>Catarrhini</taxon>
        <taxon>Hominidae</taxon>
        <taxon>Homo</taxon>
    </lineage>
</organism>
<feature type="signal peptide" evidence="5">
    <location>
        <begin position="1"/>
        <end position="18"/>
    </location>
</feature>
<feature type="chain" id="PRO_0000011587" description="Glutamate receptor ionotropic, NMDA 1">
    <location>
        <begin position="19"/>
        <end position="938"/>
    </location>
</feature>
<feature type="topological domain" description="Extracellular" evidence="22 60">
    <location>
        <begin position="19"/>
        <end position="559"/>
    </location>
</feature>
<feature type="transmembrane region" description="Helical" evidence="22 60">
    <location>
        <begin position="560"/>
        <end position="580"/>
    </location>
</feature>
<feature type="topological domain" description="Cytoplasmic" evidence="22 60">
    <location>
        <begin position="581"/>
        <end position="604"/>
    </location>
</feature>
<feature type="intramembrane region" description="Discontinuously helical" evidence="22 60">
    <location>
        <begin position="605"/>
        <end position="615"/>
    </location>
</feature>
<feature type="topological domain" description="Cytoplasmic" evidence="22 60">
    <location>
        <begin position="616"/>
        <end position="627"/>
    </location>
</feature>
<feature type="transmembrane region" description="Helical" evidence="22 60">
    <location>
        <begin position="628"/>
        <end position="648"/>
    </location>
</feature>
<feature type="topological domain" description="Extracellular" evidence="22 60">
    <location>
        <begin position="649"/>
        <end position="811"/>
    </location>
</feature>
<feature type="transmembrane region" description="Helical" evidence="22 60">
    <location>
        <begin position="812"/>
        <end position="835"/>
    </location>
</feature>
<feature type="topological domain" description="Cytoplasmic" evidence="22 60">
    <location>
        <begin position="836"/>
        <end position="938"/>
    </location>
</feature>
<feature type="region of interest" description="Pore-forming" evidence="2">
    <location>
        <begin position="603"/>
        <end position="624"/>
    </location>
</feature>
<feature type="region of interest" description="Disordered" evidence="6">
    <location>
        <begin position="889"/>
        <end position="938"/>
    </location>
</feature>
<feature type="compositionally biased region" description="Basic and acidic residues" evidence="6">
    <location>
        <begin position="916"/>
        <end position="927"/>
    </location>
</feature>
<feature type="binding site" evidence="12 13 18 50 51 52 53 54 55 56 57 58 59">
    <location>
        <position position="516"/>
    </location>
    <ligand>
        <name>glycine</name>
        <dbReference type="ChEBI" id="CHEBI:57305"/>
    </ligand>
</feature>
<feature type="binding site" evidence="12 13 18 25 50 51 52 53 54 55 56 57 58 59 67">
    <location>
        <position position="518"/>
    </location>
    <ligand>
        <name>glycine</name>
        <dbReference type="ChEBI" id="CHEBI:57305"/>
    </ligand>
</feature>
<feature type="binding site" evidence="12 13 18 24 25 44 50 51 52 53 54 55 56 57 58 59 71">
    <location>
        <position position="523"/>
    </location>
    <ligand>
        <name>glycine</name>
        <dbReference type="ChEBI" id="CHEBI:57305"/>
    </ligand>
</feature>
<feature type="binding site" evidence="12 13 18 25 50 51 52 53 54 55 56 57 58 59 67">
    <location>
        <position position="688"/>
    </location>
    <ligand>
        <name>glycine</name>
        <dbReference type="ChEBI" id="CHEBI:57305"/>
    </ligand>
</feature>
<feature type="binding site" evidence="12 13 18 24 25 44 50 51 52 53 54 55 56 57 58 59 67">
    <location>
        <position position="732"/>
    </location>
    <ligand>
        <name>glycine</name>
        <dbReference type="ChEBI" id="CHEBI:57305"/>
    </ligand>
</feature>
<feature type="modified residue" description="Phosphoserine; by PKC" evidence="39">
    <location>
        <position position="889"/>
    </location>
</feature>
<feature type="modified residue" description="Phosphoserine; by PKC" evidence="39">
    <location>
        <position position="890"/>
    </location>
</feature>
<feature type="modified residue" description="Phosphoserine; by PKC" evidence="39">
    <location>
        <position position="896"/>
    </location>
</feature>
<feature type="modified residue" description="Phosphoserine; by PKC" evidence="39">
    <location>
        <position position="897"/>
    </location>
</feature>
<feature type="glycosylation site" description="N-linked (GlcNAc...) asparagine" evidence="5 24 41 42 43 45 46 47">
    <location>
        <position position="61"/>
    </location>
</feature>
<feature type="glycosylation site" description="N-linked (GlcNAc...) asparagine" evidence="5 24 25 41 42 43 45 71">
    <location>
        <position position="203"/>
    </location>
</feature>
<feature type="glycosylation site" description="N-linked (GlcNAc...) asparagine" evidence="5 24 42 45">
    <location>
        <position position="239"/>
    </location>
</feature>
<feature type="glycosylation site" description="N-linked (GlcNAc...) asparagine" evidence="5 22 24 41 42 43 44 45 60">
    <location>
        <position position="276"/>
    </location>
</feature>
<feature type="glycosylation site" description="N-linked (GlcNAc...) asparagine" evidence="5">
    <location>
        <position position="300"/>
    </location>
</feature>
<feature type="glycosylation site" description="N-linked (GlcNAc...) asparagine" evidence="5 24 42 43 44 45">
    <location>
        <position position="350"/>
    </location>
</feature>
<feature type="glycosylation site" description="N-linked (GlcNAc...) asparagine" evidence="5 24 41 43 45">
    <location>
        <position position="368"/>
    </location>
</feature>
<feature type="glycosylation site" description="N-linked (GlcNAc...) asparagine" evidence="5">
    <location>
        <position position="440"/>
    </location>
</feature>
<feature type="glycosylation site" description="N-linked (GlcNAc...) asparagine" evidence="5 22 24 25 42 43 45 46 60 71">
    <location>
        <position position="471"/>
    </location>
</feature>
<feature type="glycosylation site" description="N-linked (GlcNAc...) asparagine" evidence="5">
    <location>
        <position position="491"/>
    </location>
</feature>
<feature type="glycosylation site" description="N-linked (GlcNAc...) asparagine" evidence="5">
    <location>
        <position position="674"/>
    </location>
</feature>
<feature type="glycosylation site" description="N-linked (GlcNAc...) asparagine" evidence="5 22 24 41 42 43 44 45 46 47 60">
    <location>
        <position position="771"/>
    </location>
</feature>
<feature type="disulfide bond" evidence="24 25 41 42 43 44 45 46 67">
    <location>
        <begin position="79"/>
        <end position="308"/>
    </location>
</feature>
<feature type="disulfide bond" evidence="12 13 18 24 25 27 41 42 45 46 47 48 50 51 52 53 54 55 56 57 58 59 67">
    <location>
        <begin position="420"/>
        <end position="454"/>
    </location>
</feature>
<feature type="disulfide bond" evidence="12 13 18 24 25 27 41 42 43 44 45 46 47 48 50 51 52 53 54 55 56 57 58 59 67">
    <location>
        <begin position="436"/>
        <end position="455"/>
    </location>
</feature>
<feature type="disulfide bond" evidence="12 13 18 24 25 42 44 45 50 54 59 67 71">
    <location>
        <begin position="744"/>
        <end position="798"/>
    </location>
</feature>
<feature type="splice variant" id="VSP_011777" description="In isoform 5, isoform 6 and isoform 7." evidence="35 37">
    <original>K</original>
    <variation>KSKKRNYENLDQLSYDNKRGPK</variation>
    <location>
        <position position="190"/>
    </location>
</feature>
<feature type="splice variant" id="VSP_045464" description="In isoform 7." evidence="37">
    <original>DRKSGRAEPDPKKKATFRAITSTLASSFKRRRSSKDTSTGGGRGALQNQKDTVLPRRAIEREEGQLQLCSRHRES</original>
    <variation>QYHPTDITGPLNLSDPSVSTVV</variation>
    <location>
        <begin position="864"/>
        <end position="938"/>
    </location>
</feature>
<feature type="splice variant" id="VSP_000139" description="In isoform 2." evidence="36">
    <location>
        <begin position="864"/>
        <end position="900"/>
    </location>
</feature>
<feature type="splice variant" id="VSP_000137" description="In isoform 1." evidence="34 36">
    <original>DRKSGRAEPDPKKKATFRAITS</original>
    <variation>QYHPTDITGPLNLSDPSVSTVV</variation>
    <location>
        <begin position="864"/>
        <end position="885"/>
    </location>
</feature>
<feature type="splice variant" id="VSP_000138" description="In isoform 1." evidence="34 36">
    <location>
        <begin position="886"/>
        <end position="938"/>
    </location>
</feature>
<feature type="splice variant" id="VSP_011778" description="In isoform 4 and isoform 6." evidence="35 37">
    <original>STGGGRGALQNQKDTVLPRRAI</original>
    <variation>QYHPTDITGPLNLSDPSVSTVV</variation>
    <location>
        <begin position="901"/>
        <end position="922"/>
    </location>
</feature>
<feature type="splice variant" id="VSP_011779" description="In isoform 4 and isoform 6." evidence="35 37">
    <location>
        <begin position="923"/>
        <end position="938"/>
    </location>
</feature>
<feature type="sequence variant" id="VAR_079984" description="In NDHMSR; changed glutamate-gated calcium ion channel activity; increased inhibition by zinc; dbSNP:rs200777850." evidence="14">
    <original>R</original>
    <variation>W</variation>
    <location>
        <position position="217"/>
    </location>
</feature>
<feature type="sequence variant" id="VAR_079985" description="In NDHMSR; uncertain significance; dbSNP:rs869312865." evidence="16">
    <original>D</original>
    <variation>H</variation>
    <location>
        <position position="227"/>
    </location>
</feature>
<feature type="sequence variant" id="VAR_079986" description="Found in a patient with schizophrenia; uncertain significance." evidence="9">
    <original>R</original>
    <variation>Q</variation>
    <location>
        <position position="306"/>
    </location>
</feature>
<feature type="sequence variant" id="VAR_079987" description="In dbSNP:rs148008303." evidence="9">
    <original>A</original>
    <variation>S</variation>
    <location>
        <position position="349"/>
    </location>
</feature>
<feature type="sequence variant" id="VAR_079988" description="In dbSNP:rs763133592." evidence="9">
    <original>T</original>
    <variation>A</variation>
    <location>
        <position position="419"/>
    </location>
</feature>
<feature type="sequence variant" id="VAR_049187" description="In dbSNP:rs3181457." evidence="32">
    <original>I</original>
    <variation>M</variation>
    <location>
        <position position="540"/>
    </location>
</feature>
<feature type="sequence variant" id="VAR_079989" description="In NDHMSD; changed localization to the cell membrane; decreased glutamate-gated calcium ion channel activity; dbSNP:rs1554770054." evidence="11 14 17">
    <original>D</original>
    <variation>E</variation>
    <location>
        <position position="552"/>
    </location>
</feature>
<feature type="sequence variant" id="VAR_079990" description="In DEE101; loss of function in calcium ion transmembrane import into cytosol." evidence="14">
    <location>
        <begin position="556"/>
        <end position="938"/>
    </location>
</feature>
<feature type="sequence variant" id="VAR_079991" description="In NDHMSD; changed localization to the cell membrane; loss of glutamate-gated calcium ion channel activity; dbSNP:rs878853143." evidence="10 14 17">
    <original>P</original>
    <variation>R</variation>
    <location>
        <position position="557"/>
    </location>
</feature>
<feature type="sequence variant" id="VAR_066597" description="In NDHMSD; there is near abolition of the activity of the NMDA receptor in Xenopus oocytes; alters the 3-dimensional structure at the receptor's channel pore entrance." evidence="8">
    <original>S</original>
    <variation>SS</variation>
    <location>
        <position position="560"/>
    </location>
</feature>
<feature type="sequence variant" id="VAR_079992" description="In NDHMSD; loss of function in calcium ion transmembrane import into cytosol; dbSNP:rs1833614590." evidence="14">
    <original>G</original>
    <variation>R</variation>
    <location>
        <position position="618"/>
    </location>
</feature>
<feature type="sequence variant" id="VAR_079993" description="In NDHMSD; decreased localization to the plasma membrane of GRIN1/GRIN2B NMDA receptor complexes; changed glutamate-gated calcium ion channel activity; decreased activation by glutamate and glycine; decreased sensitivity to magnesium block; loss of function in calcium ion transmembrane import into cytosol; dbSNP:rs797045047." evidence="14 20">
    <original>G</original>
    <variation>R</variation>
    <location>
        <position position="620"/>
    </location>
</feature>
<feature type="sequence variant" id="VAR_089651" description="In NDHMSD; uncertain significance." evidence="26">
    <original>A</original>
    <variation>S</variation>
    <location>
        <position position="637"/>
    </location>
</feature>
<feature type="sequence variant" id="VAR_089652" description="In NDHMSD; uncertain significance; may affect glutamate-gated calcium ion channel activity; decreased sensitivity to magnesium block; dbSNP:rs1554770221." evidence="26">
    <original>A</original>
    <variation>V</variation>
    <location>
        <position position="637"/>
    </location>
</feature>
<feature type="sequence variant" id="VAR_089653" description="In NDHMSD; likely pathogenic; dbSNP:rs1393555703." evidence="26">
    <original>G</original>
    <variation>A</variation>
    <location>
        <position position="638"/>
    </location>
</feature>
<feature type="sequence variant" id="VAR_089654" description="In NDHMSD; likely pathogenic; changed glutamate-gated calcium ion channel activity; mutant channels are activated at 2-fold lower glutamate and glycine concentrations; decreased sensitivity to magnesium block; reduced localization to cell membrane." evidence="26">
    <original>G</original>
    <variation>V</variation>
    <location>
        <position position="638"/>
    </location>
</feature>
<feature type="sequence variant" id="VAR_079994" description="In NDHMSD; likely pathogenic; may affect glutamate-gated calcium ion channel activity; decreased sensitivity to magnesium block; dbSNP:rs1060500046." evidence="11 26">
    <original>M</original>
    <variation>I</variation>
    <location>
        <position position="641"/>
    </location>
</feature>
<feature type="sequence variant" id="VAR_089655" description="In NDHMSD; likely pathogenic; dbSNP:rs2131299136." evidence="26">
    <original>M</original>
    <variation>L</variation>
    <location>
        <position position="641"/>
    </location>
</feature>
<feature type="sequence variant" id="VAR_089656" description="In NDHMSD; likely pathogenic; dbSNP:rs2131299136." evidence="26">
    <original>M</original>
    <variation>V</variation>
    <location>
        <position position="641"/>
    </location>
</feature>
<feature type="sequence variant" id="VAR_089657" description="In NDHMSD; uncertain significance; changed glutamate-gated calcium ion channel activity; mutant channels are activated at 2-fold higher glutamate and glycine concentrations." evidence="26">
    <original>I</original>
    <variation>T</variation>
    <location>
        <position position="642"/>
    </location>
</feature>
<feature type="sequence variant" id="VAR_089658" description="In NDHMSD; uncertain significance; dbSNP:rs1554770243." evidence="26">
    <original>I</original>
    <variation>V</variation>
    <location>
        <position position="643"/>
    </location>
</feature>
<feature type="sequence variant" id="VAR_079995" description="In NDHMSD; uncertain significance; no effect on glutamate-gated calcium ion channel activity; dbSNP:rs1833621434." evidence="14">
    <original>A</original>
    <variation>S</variation>
    <location>
        <position position="645"/>
    </location>
</feature>
<feature type="sequence variant" id="VAR_089659" description="In NDHMSD; likely pathogenic; reduced localization to cell membrane; changed glutamate-gated calcium ion channel activity; mutant channels are activated at 40-fold lower glutamate concentrations and 50-fold lower glycine concentrations." evidence="26">
    <original>Y</original>
    <variation>C</variation>
    <location>
        <position position="647"/>
    </location>
</feature>
<feature type="sequence variant" id="VAR_079996" description="In NDHMSD; likely pathogenic; decreased ion transmembrane transport; reduced localization to cell membrane; changed glutamate-gated calcium ion channel activity; mutant channels are activated at 50-fold lower glutamate concentrations and 28-fold lower glycine concentrations." evidence="14 26">
    <original>Y</original>
    <variation>S</variation>
    <location>
        <position position="647"/>
    </location>
</feature>
<feature type="sequence variant" id="VAR_089660" description="In NDHMSD; likely pathogenic; changed glutamate-gated calcium ion channel activity; mutant channels are activated at 100-fold lower glutamate concentrations and 30-fold lower glycine concentrations; dbSNP:rs1131691590." evidence="26">
    <original>N</original>
    <variation>I</variation>
    <location>
        <position position="650"/>
    </location>
</feature>
<feature type="sequence variant" id="VAR_079997" description="In NDHMSD; likely pathogenic; changed glutamate-gated calcium ion channel activity; mutant channels are activated at 8-fold lower glutamate concentrations and 5-fold lower glycine concentrations; reduced localization to cell membrane; dbSNP:rs771610568." evidence="11 26">
    <original>N</original>
    <variation>K</variation>
    <location>
        <position position="650"/>
    </location>
</feature>
<feature type="sequence variant" id="VAR_089661" description="In NDHMSD; uncertain significance." evidence="26">
    <original>A</original>
    <variation>T</variation>
    <location>
        <position position="652"/>
    </location>
</feature>
<feature type="sequence variant" id="VAR_089662" description="In NDHMSD; likely pathogenic; changed glutamate-gated calcium ion channel activity; mutant channels are activated at 30-fold lower glutamate concentrations and 50-fold lower glycine concentrations." evidence="26">
    <original>A</original>
    <variation>T</variation>
    <location>
        <position position="653"/>
    </location>
</feature>
<feature type="sequence variant" id="VAR_089663" description="In NDHMSD; likely pathogenic; changed glutamate-gated calcium ion channel activity; mutant channels are activated at 13-fold lower glutamate concentrations and 9-fold lower glycine concentrations; dbSNP:rs1554770262." evidence="26">
    <original>F</original>
    <variation>C</variation>
    <location>
        <position position="654"/>
    </location>
</feature>
<feature type="sequence variant" id="VAR_089664" description="In NDHMSD; likely pathogenic; changed glutamate-gated calcium ion channel activity; mutant channels are activated at 10-fold lower glutamate concentrations and 13-fold lower glycine concentrations; dbSNP:rs1564363923." evidence="26">
    <original>L</original>
    <variation>Q</variation>
    <location>
        <position position="655"/>
    </location>
</feature>
<feature type="sequence variant" id="VAR_066598" description="In NDHMSD; this mutation produces a significant increase in NMDA receptor-induced calcium currents; excessive calcium influx through NMDA receptor could lead to excitotoxic neuronal cell damage; dbSNP:rs387906635." evidence="8">
    <original>E</original>
    <variation>K</variation>
    <location>
        <position position="662"/>
    </location>
</feature>
<feature type="sequence variant" id="VAR_069057" description="In dbSNP:rs1126448." evidence="32">
    <original>A</original>
    <variation>S</variation>
    <location>
        <position position="682"/>
    </location>
</feature>
<feature type="sequence variant" id="VAR_079998" description="In NDHMSD; dbSNP:rs1833635820." evidence="21">
    <original>S</original>
    <variation>Y</variation>
    <location>
        <position position="688"/>
    </location>
</feature>
<feature type="sequence variant" id="VAR_079999" description="In NDHMSD; loss of glutamate-gated calcium ion channel activity; dbSNP:rs797044925." evidence="11 14">
    <original>G</original>
    <variation>R</variation>
    <location>
        <position position="815"/>
    </location>
</feature>
<feature type="sequence variant" id="VAR_080000" description="In NDHMSD." evidence="14">
    <original>G</original>
    <variation>V</variation>
    <location>
        <position position="815"/>
    </location>
</feature>
<feature type="sequence variant" id="VAR_080001" description="In NDHMSD; decreased glutamate-gated calcium ion channel activity; dbSNP:rs1554770624." evidence="14">
    <original>F</original>
    <variation>L</variation>
    <location>
        <position position="817"/>
    </location>
</feature>
<feature type="sequence variant" id="VAR_080002" description="In NDHMSD; loss of function in calcium ion transmembrane import into cytosol; dbSNP:rs1451230055." evidence="14 21">
    <original>G</original>
    <variation>R</variation>
    <location>
        <position position="827"/>
    </location>
</feature>
<feature type="sequence variant" id="VAR_080003" description="In NDHMSD; no effect on glutamate-gated calcium ion channel activity; dbSNP:rs1554770667." evidence="14">
    <original>R</original>
    <variation>C</variation>
    <location>
        <position position="844"/>
    </location>
</feature>
<feature type="mutagenesis site" description="Slight decrease in glutamate and glycine agonist potency; mutant channels are activated at 2-fold higher glutamate and glycine concentrations." evidence="26">
    <original>I</original>
    <variation>L</variation>
    <location>
        <position position="642"/>
    </location>
</feature>
<feature type="mutagenesis site" description="Increase in glutamate and glycine agonist potency; mutant channels are activated lower glutamate and glycine concentrations." evidence="26">
    <original>V</original>
    <variation>M</variation>
    <location>
        <position position="644"/>
    </location>
</feature>
<feature type="mutagenesis site" description="Increase in glutamate and glycine agonist potency; mutant channels are activated lower glutamate and glycine concentrations." evidence="26">
    <original>A</original>
    <variation>G</variation>
    <location>
        <position position="653"/>
    </location>
</feature>
<feature type="mutagenesis site" description="Slight decrease in glycine agonist potency; no effect on glutamate agonist potency." evidence="19">
    <original>M</original>
    <variation>V</variation>
    <location>
        <position position="813"/>
    </location>
</feature>
<feature type="sequence conflict" description="In Ref. 8; AAB25917." evidence="38" ref="8">
    <original>P</original>
    <variation>S</variation>
    <location>
        <position position="389"/>
    </location>
</feature>
<feature type="sequence conflict" description="In Ref. 1; AAB59361." evidence="38" ref="1">
    <original>E</original>
    <variation>K</variation>
    <location>
        <position position="488"/>
    </location>
</feature>
<feature type="strand" evidence="85">
    <location>
        <begin position="26"/>
        <end position="31"/>
    </location>
</feature>
<feature type="helix" evidence="85">
    <location>
        <begin position="36"/>
        <end position="52"/>
    </location>
</feature>
<feature type="strand" evidence="85">
    <location>
        <begin position="59"/>
        <end position="62"/>
    </location>
</feature>
<feature type="strand" evidence="85">
    <location>
        <begin position="69"/>
        <end position="71"/>
    </location>
</feature>
<feature type="helix" evidence="85">
    <location>
        <begin position="74"/>
        <end position="80"/>
    </location>
</feature>
<feature type="helix" evidence="85">
    <location>
        <begin position="83"/>
        <end position="85"/>
    </location>
</feature>
<feature type="strand" evidence="85">
    <location>
        <begin position="87"/>
        <end position="92"/>
    </location>
</feature>
<feature type="strand" evidence="85">
    <location>
        <begin position="96"/>
        <end position="99"/>
    </location>
</feature>
<feature type="helix" evidence="85">
    <location>
        <begin position="104"/>
        <end position="110"/>
    </location>
</feature>
<feature type="helix" evidence="85">
    <location>
        <begin position="112"/>
        <end position="114"/>
    </location>
</feature>
<feature type="strand" evidence="85">
    <location>
        <begin position="118"/>
        <end position="122"/>
    </location>
</feature>
<feature type="helix" evidence="84">
    <location>
        <begin position="126"/>
        <end position="129"/>
    </location>
</feature>
<feature type="strand" evidence="85">
    <location>
        <begin position="131"/>
        <end position="133"/>
    </location>
</feature>
<feature type="strand" evidence="85">
    <location>
        <begin position="138"/>
        <end position="141"/>
    </location>
</feature>
<feature type="helix" evidence="85">
    <location>
        <begin position="147"/>
        <end position="157"/>
    </location>
</feature>
<feature type="strand" evidence="85">
    <location>
        <begin position="164"/>
        <end position="167"/>
    </location>
</feature>
<feature type="helix" evidence="85">
    <location>
        <begin position="171"/>
        <end position="184"/>
    </location>
</feature>
<feature type="helix" evidence="85">
    <location>
        <begin position="185"/>
        <end position="187"/>
    </location>
</feature>
<feature type="strand" evidence="85">
    <location>
        <begin position="192"/>
        <end position="196"/>
    </location>
</feature>
<feature type="helix" evidence="85">
    <location>
        <begin position="206"/>
        <end position="211"/>
    </location>
</feature>
<feature type="strand" evidence="85">
    <location>
        <begin position="213"/>
        <end position="215"/>
    </location>
</feature>
<feature type="strand" evidence="85">
    <location>
        <begin position="218"/>
        <end position="222"/>
    </location>
</feature>
<feature type="helix" evidence="85">
    <location>
        <begin position="225"/>
        <end position="237"/>
    </location>
</feature>
<feature type="turn" evidence="85">
    <location>
        <begin position="238"/>
        <end position="241"/>
    </location>
</feature>
<feature type="strand" evidence="85">
    <location>
        <begin position="246"/>
        <end position="248"/>
    </location>
</feature>
<feature type="turn" evidence="85">
    <location>
        <begin position="252"/>
        <end position="254"/>
    </location>
</feature>
<feature type="helix" evidence="85">
    <location>
        <begin position="257"/>
        <end position="261"/>
    </location>
</feature>
<feature type="strand" evidence="84">
    <location>
        <begin position="266"/>
        <end position="271"/>
    </location>
</feature>
<feature type="turn" evidence="85">
    <location>
        <begin position="272"/>
        <end position="275"/>
    </location>
</feature>
<feature type="helix" evidence="85">
    <location>
        <begin position="277"/>
        <end position="295"/>
    </location>
</feature>
<feature type="strand" evidence="85">
    <location>
        <begin position="306"/>
        <end position="310"/>
    </location>
</feature>
<feature type="helix" evidence="85">
    <location>
        <begin position="319"/>
        <end position="325"/>
    </location>
</feature>
<feature type="turn" evidence="85">
    <location>
        <begin position="333"/>
        <end position="335"/>
    </location>
</feature>
<feature type="strand" evidence="84">
    <location>
        <begin position="338"/>
        <end position="340"/>
    </location>
</feature>
<feature type="turn" evidence="85">
    <location>
        <begin position="342"/>
        <end position="344"/>
    </location>
</feature>
<feature type="strand" evidence="85">
    <location>
        <begin position="351"/>
        <end position="357"/>
    </location>
</feature>
<feature type="strand" evidence="85">
    <location>
        <begin position="360"/>
        <end position="367"/>
    </location>
</feature>
<feature type="strand" evidence="85">
    <location>
        <begin position="369"/>
        <end position="373"/>
    </location>
</feature>
<feature type="turn" evidence="85">
    <location>
        <begin position="382"/>
        <end position="384"/>
    </location>
</feature>
<feature type="strand" evidence="80">
    <location>
        <begin position="398"/>
        <end position="402"/>
    </location>
</feature>
<feature type="turn" evidence="80">
    <location>
        <begin position="406"/>
        <end position="408"/>
    </location>
</feature>
<feature type="strand" evidence="80">
    <location>
        <begin position="409"/>
        <end position="413"/>
    </location>
</feature>
<feature type="strand" evidence="82">
    <location>
        <begin position="426"/>
        <end position="428"/>
    </location>
</feature>
<feature type="strand" evidence="80">
    <location>
        <begin position="434"/>
        <end position="441"/>
    </location>
</feature>
<feature type="strand" evidence="85">
    <location>
        <begin position="444"/>
        <end position="446"/>
    </location>
</feature>
<feature type="strand" evidence="80">
    <location>
        <begin position="450"/>
        <end position="457"/>
    </location>
</feature>
<feature type="helix" evidence="80">
    <location>
        <begin position="458"/>
        <end position="470"/>
    </location>
</feature>
<feature type="strand" evidence="80">
    <location>
        <begin position="474"/>
        <end position="478"/>
    </location>
</feature>
<feature type="strand" evidence="80">
    <location>
        <begin position="487"/>
        <end position="489"/>
    </location>
</feature>
<feature type="strand" evidence="80">
    <location>
        <begin position="496"/>
        <end position="498"/>
    </location>
</feature>
<feature type="helix" evidence="80">
    <location>
        <begin position="500"/>
        <end position="506"/>
    </location>
</feature>
<feature type="strand" evidence="80">
    <location>
        <begin position="511"/>
        <end position="513"/>
    </location>
</feature>
<feature type="helix" evidence="80">
    <location>
        <begin position="521"/>
        <end position="524"/>
    </location>
</feature>
<feature type="strand" evidence="80">
    <location>
        <begin position="527"/>
        <end position="529"/>
    </location>
</feature>
<feature type="strand" evidence="80">
    <location>
        <begin position="533"/>
        <end position="543"/>
    </location>
</feature>
<feature type="strand" evidence="84">
    <location>
        <begin position="554"/>
        <end position="558"/>
    </location>
</feature>
<feature type="helix" evidence="85">
    <location>
        <begin position="561"/>
        <end position="581"/>
    </location>
</feature>
<feature type="helix" evidence="85">
    <location>
        <begin position="604"/>
        <end position="614"/>
    </location>
</feature>
<feature type="helix" evidence="85">
    <location>
        <begin position="627"/>
        <end position="654"/>
    </location>
</feature>
<feature type="helix" evidence="84">
    <location>
        <begin position="666"/>
        <end position="668"/>
    </location>
</feature>
<feature type="helix" evidence="80">
    <location>
        <begin position="670"/>
        <end position="673"/>
    </location>
</feature>
<feature type="strand" evidence="83">
    <location>
        <begin position="677"/>
        <end position="679"/>
    </location>
</feature>
<feature type="strand" evidence="85">
    <location>
        <begin position="684"/>
        <end position="687"/>
    </location>
</feature>
<feature type="helix" evidence="80">
    <location>
        <begin position="688"/>
        <end position="695"/>
    </location>
</feature>
<feature type="helix" evidence="80">
    <location>
        <begin position="697"/>
        <end position="699"/>
    </location>
</feature>
<feature type="helix" evidence="80">
    <location>
        <begin position="700"/>
        <end position="707"/>
    </location>
</feature>
<feature type="strand" evidence="80">
    <location>
        <begin position="711"/>
        <end position="713"/>
    </location>
</feature>
<feature type="helix" evidence="80">
    <location>
        <begin position="714"/>
        <end position="722"/>
    </location>
</feature>
<feature type="strand" evidence="80">
    <location>
        <begin position="727"/>
        <end position="732"/>
    </location>
</feature>
<feature type="helix" evidence="80">
    <location>
        <begin position="733"/>
        <end position="742"/>
    </location>
</feature>
<feature type="strand" evidence="80">
    <location>
        <begin position="746"/>
        <end position="758"/>
    </location>
</feature>
<feature type="strand" evidence="81">
    <location>
        <begin position="761"/>
        <end position="763"/>
    </location>
</feature>
<feature type="helix" evidence="80">
    <location>
        <begin position="769"/>
        <end position="781"/>
    </location>
</feature>
<feature type="helix" evidence="80">
    <location>
        <begin position="784"/>
        <end position="792"/>
    </location>
</feature>
<feature type="helix" evidence="84">
    <location>
        <begin position="811"/>
        <end position="837"/>
    </location>
</feature>
<feature type="turn" evidence="84">
    <location>
        <begin position="838"/>
        <end position="840"/>
    </location>
</feature>
<feature type="helix" evidence="79">
    <location>
        <begin position="877"/>
        <end position="892"/>
    </location>
</feature>